<accession>P04264</accession>
<accession>B2RA01</accession>
<accession>P85925</accession>
<accession>P86104</accession>
<accession>Q14720</accession>
<accession>Q6GSJ0</accession>
<accession>Q9H298</accession>
<feature type="initiator methionine" description="Removed" evidence="16">
    <location>
        <position position="1"/>
    </location>
</feature>
<feature type="chain" id="PRO_0000063709" description="Keratin, type II cytoskeletal 1">
    <location>
        <begin position="2"/>
        <end position="644"/>
    </location>
</feature>
<feature type="domain" description="IF rod" evidence="2">
    <location>
        <begin position="180"/>
        <end position="493"/>
    </location>
</feature>
<feature type="region of interest" description="Head">
    <location>
        <begin position="2"/>
        <end position="179"/>
    </location>
</feature>
<feature type="region of interest" description="Disordered" evidence="3">
    <location>
        <begin position="22"/>
        <end position="47"/>
    </location>
</feature>
<feature type="region of interest" description="Coil 1A">
    <location>
        <begin position="180"/>
        <end position="215"/>
    </location>
</feature>
<feature type="region of interest" description="Linker 1">
    <location>
        <begin position="216"/>
        <end position="234"/>
    </location>
</feature>
<feature type="region of interest" description="Coil 1B">
    <location>
        <begin position="235"/>
        <end position="326"/>
    </location>
</feature>
<feature type="region of interest" description="Linker 12">
    <location>
        <begin position="327"/>
        <end position="350"/>
    </location>
</feature>
<feature type="region of interest" description="Coil 2">
    <location>
        <begin position="351"/>
        <end position="489"/>
    </location>
</feature>
<feature type="region of interest" description="Disordered" evidence="3">
    <location>
        <begin position="489"/>
        <end position="523"/>
    </location>
</feature>
<feature type="region of interest" description="Tail">
    <location>
        <begin position="490"/>
        <end position="644"/>
    </location>
</feature>
<feature type="region of interest" description="Disordered" evidence="3">
    <location>
        <begin position="568"/>
        <end position="644"/>
    </location>
</feature>
<feature type="compositionally biased region" description="Low complexity" evidence="3">
    <location>
        <begin position="22"/>
        <end position="38"/>
    </location>
</feature>
<feature type="compositionally biased region" description="Low complexity" evidence="3">
    <location>
        <begin position="501"/>
        <end position="511"/>
    </location>
</feature>
<feature type="compositionally biased region" description="Gly residues" evidence="3">
    <location>
        <begin position="513"/>
        <end position="523"/>
    </location>
</feature>
<feature type="compositionally biased region" description="Gly residues" evidence="3">
    <location>
        <begin position="568"/>
        <end position="620"/>
    </location>
</feature>
<feature type="compositionally biased region" description="Low complexity" evidence="3">
    <location>
        <begin position="621"/>
        <end position="631"/>
    </location>
</feature>
<feature type="compositionally biased region" description="Polar residues" evidence="3">
    <location>
        <begin position="632"/>
        <end position="644"/>
    </location>
</feature>
<feature type="site" description="Stutter">
    <location>
        <position position="433"/>
    </location>
</feature>
<feature type="modified residue" description="Omega-N-methylarginine" evidence="1">
    <location>
        <position position="12"/>
    </location>
</feature>
<feature type="modified residue" description="Phosphoserine" evidence="1">
    <location>
        <position position="18"/>
    </location>
</feature>
<feature type="modified residue" description="Phosphoserine" evidence="42 43">
    <location>
        <position position="21"/>
    </location>
</feature>
<feature type="modified residue" description="Omega-N-methylarginine" evidence="1">
    <location>
        <position position="45"/>
    </location>
</feature>
<feature type="modified residue" description="Phosphoserine" evidence="41 43">
    <location>
        <position position="66"/>
    </location>
</feature>
<feature type="modified residue" description="Omega-N-methylarginine" evidence="37">
    <location>
        <position position="82"/>
    </location>
</feature>
<feature type="modified residue" description="N6,N6-dimethyllysine" evidence="37">
    <location>
        <position position="276"/>
    </location>
</feature>
<feature type="modified residue" description="Phosphoserine" evidence="43">
    <location>
        <position position="344"/>
    </location>
</feature>
<feature type="modified residue" description="Omega-N-methylarginine" evidence="1">
    <location>
        <position position="518"/>
    </location>
</feature>
<feature type="modified residue" description="Omega-N-methylarginine" evidence="1">
    <location>
        <position position="588"/>
    </location>
</feature>
<feature type="sequence variant" id="VAR_017819" description="In NEPPK; dbSNP:rs57977969." evidence="34">
    <original>K</original>
    <variation>I</variation>
    <location>
        <position position="74"/>
    </location>
</feature>
<feature type="sequence variant" id="VAR_017820" description="In EHK1; dbSNP:rs57959072." evidence="12">
    <original>V</original>
    <variation>D</variation>
    <location>
        <position position="155"/>
    </location>
</feature>
<feature type="sequence variant" id="VAR_003853" description="In EHK1; dbSNP:rs57959072." evidence="31">
    <original>V</original>
    <variation>G</variation>
    <location>
        <position position="155"/>
    </location>
</feature>
<feature type="sequence variant" id="VAR_003854" description="In EHK1; dbSNP:rs57695159." evidence="19">
    <original>L</original>
    <variation>P</variation>
    <location>
        <position position="161"/>
    </location>
</feature>
<feature type="sequence variant" id="VAR_038627" description="In palmoplantar keratoderma; and mild ichthyosis largely limited to the flexural areas.">
    <location>
        <begin position="176"/>
        <end position="197"/>
    </location>
</feature>
<feature type="sequence variant" id="VAR_003855" description="In EHK1; dbSNP:rs60022878." evidence="32">
    <original>S</original>
    <variation>P</variation>
    <location>
        <position position="186"/>
    </location>
</feature>
<feature type="sequence variant" id="VAR_017821" description="In EHK1; dbSNP:rs59429455." evidence="15 23">
    <original>N</original>
    <variation>K</variation>
    <location>
        <position position="188"/>
    </location>
</feature>
<feature type="sequence variant" id="VAR_003856" description="In EHK1; dbSNP:rs58928370." evidence="23 31 32">
    <original>N</original>
    <variation>S</variation>
    <location>
        <position position="188"/>
    </location>
</feature>
<feature type="sequence variant" id="VAR_017822" description="In EHK1; severe; dbSNP:rs58928370." evidence="5">
    <original>N</original>
    <variation>T</variation>
    <location>
        <position position="188"/>
    </location>
</feature>
<feature type="sequence variant" id="VAR_003857" description="In EHK1; dbSNP:rs60937700." evidence="31">
    <original>S</original>
    <variation>P</variation>
    <location>
        <position position="193"/>
    </location>
</feature>
<feature type="sequence variant" id="VAR_017823" description="In EHK1; dbSNP:rs61549035." evidence="8">
    <original>L</original>
    <variation>P</variation>
    <location>
        <position position="214"/>
    </location>
</feature>
<feature type="sequence variant" id="VAR_003858">
    <original>I</original>
    <variation>V</variation>
    <location>
        <position position="312"/>
    </location>
</feature>
<feature type="sequence variant" id="VAR_003859">
    <original>I</original>
    <variation>T</variation>
    <location>
        <position position="330"/>
    </location>
</feature>
<feature type="sequence variant" id="VAR_017824" description="In EHK1; dbSNP:rs58062863." evidence="36">
    <original>D</original>
    <variation>V</variation>
    <location>
        <position position="340"/>
    </location>
</feature>
<feature type="sequence variant" id="VAR_003860" description="In dbSNP:rs1050872." evidence="9 26">
    <original>Y</original>
    <variation>N</variation>
    <location>
        <position position="358"/>
    </location>
</feature>
<feature type="sequence variant" id="VAR_088636" description="In EPPK2; uncertain significance." evidence="30">
    <original>A</original>
    <variation>D</variation>
    <location>
        <position position="436"/>
    </location>
</feature>
<feature type="sequence variant" id="VAR_038628" description="In dbSNP:rs17678945.">
    <original>A</original>
    <variation>S</variation>
    <location>
        <position position="454"/>
    </location>
</feature>
<feature type="sequence variant" id="VAR_038629" description="In palmoplantar keratoderma; and mild ichthyosis largely limited to the flexural areas.">
    <location>
        <begin position="459"/>
        <end position="466"/>
    </location>
</feature>
<feature type="sequence variant" id="VAR_071986" description="In EHK1; dbSNP:rs59089201." evidence="23">
    <original>E</original>
    <variation>Q</variation>
    <location>
        <position position="478"/>
    </location>
</feature>
<feature type="sequence variant" id="VAR_017825" description="In AEI2; dbSNP:rs61218439." evidence="4 6">
    <original>I</original>
    <variation>F</variation>
    <location>
        <position position="479"/>
    </location>
</feature>
<feature type="sequence variant" id="VAR_017826" description="In AEI2 and EHK1; dbSNP:rs57837128." evidence="4 7 23">
    <original>I</original>
    <variation>T</variation>
    <location>
        <position position="479"/>
    </location>
</feature>
<feature type="sequence variant" id="VAR_017827" description="In EHK1; dbSNP:rs58420087." evidence="33">
    <original>Y</original>
    <variation>C</variation>
    <location>
        <position position="482"/>
    </location>
</feature>
<feature type="sequence variant" id="VAR_071987" description="In EHK1; dbSNP:rs267607430." evidence="23">
    <original>L</original>
    <variation>P</variation>
    <location>
        <position position="485"/>
    </location>
</feature>
<feature type="sequence variant" id="VAR_017828" description="In EHK1; dbSNP:rs56914602." evidence="15 23">
    <original>L</original>
    <variation>P</variation>
    <location>
        <position position="486"/>
    </location>
</feature>
<feature type="sequence variant" id="VAR_071988" description="In EHK1; dbSNP:rs60279707." evidence="23">
    <original>E</original>
    <variation>K</variation>
    <location>
        <position position="490"/>
    </location>
</feature>
<feature type="sequence variant" id="VAR_003861" description="In EHK1; dbSNP:rs60279707." evidence="18">
    <original>E</original>
    <variation>Q</variation>
    <location>
        <position position="490"/>
    </location>
</feature>
<feature type="sequence variant" id="VAR_003862" evidence="27">
    <original>G</original>
    <variation>C</variation>
    <location>
        <position position="537"/>
    </location>
</feature>
<feature type="sequence variant" id="VAR_003864" description="In allele 1B." evidence="17">
    <location>
        <begin position="560"/>
        <end position="566"/>
    </location>
</feature>
<feature type="sequence variant" id="VAR_003863" description="In dbSNP:rs14024." evidence="9 11 20 26 27">
    <original>K</original>
    <variation>R</variation>
    <location>
        <position position="633"/>
    </location>
</feature>
<feature type="sequence conflict" description="In Ref. 9; AAA36153." evidence="38" ref="9">
    <original>L</original>
    <variation>M</variation>
    <location>
        <position position="201"/>
    </location>
</feature>
<feature type="sequence conflict" description="In Ref. 9; AAA36153." evidence="38" ref="9">
    <original>Q</original>
    <variation>K</variation>
    <location>
        <position position="206"/>
    </location>
</feature>
<feature type="sequence conflict" description="In Ref. 9; AAA36153." evidence="38" ref="9">
    <original>L</original>
    <variation>S</variation>
    <location>
        <position position="238"/>
    </location>
</feature>
<feature type="sequence conflict" description="In Ref. 9; AAA36153." evidence="38" ref="9">
    <original>SL</original>
    <variation>QF</variation>
    <location>
        <begin position="344"/>
        <end position="345"/>
    </location>
</feature>
<feature type="sequence conflict" description="In Ref. 4; BAG36698." evidence="38" ref="4">
    <original>R</original>
    <variation>H</variation>
    <location>
        <position position="403"/>
    </location>
</feature>
<feature type="sequence conflict" description="In Ref. 9; AAA36153." evidence="38" ref="9">
    <original>V</original>
    <variation>M</variation>
    <location>
        <position position="404"/>
    </location>
</feature>
<feature type="sequence conflict" description="In Ref. 9; AAA36153." evidence="38" ref="9">
    <original>L</original>
    <variation>M</variation>
    <location>
        <position position="447"/>
    </location>
</feature>
<feature type="sequence conflict" description="In Ref. 9; AAA36153." evidence="38" ref="9">
    <original>R</original>
    <variation>C</variation>
    <location>
        <position position="463"/>
    </location>
</feature>
<feature type="sequence conflict" description="In Ref. 9; AAA36153." evidence="38" ref="9">
    <original>Q</original>
    <variation>H</variation>
    <location>
        <position position="466"/>
    </location>
</feature>
<feature type="sequence conflict" description="In Ref. 9; AAA36153." evidence="38" ref="9">
    <original>S</original>
    <variation>T</variation>
    <location>
        <position position="504"/>
    </location>
</feature>
<feature type="sequence conflict" description="In Ref. 9; AAA36153." evidence="38" ref="9">
    <original>TI</original>
    <variation>SM</variation>
    <location>
        <begin position="511"/>
        <end position="512"/>
    </location>
</feature>
<feature type="sequence conflict" description="In Ref. 9; AAA36153." evidence="38" ref="9">
    <original>G</original>
    <variation>S</variation>
    <location>
        <position position="564"/>
    </location>
</feature>
<feature type="sequence conflict" description="In Ref. 9; AAA36153." evidence="38" ref="9">
    <original>I</original>
    <variation>S</variation>
    <location>
        <position position="613"/>
    </location>
</feature>
<feature type="sequence conflict" description="In Ref. 9; AAA36153." evidence="38" ref="9">
    <original>T</original>
    <variation>S</variation>
    <location>
        <position position="638"/>
    </location>
</feature>
<feature type="helix" evidence="44">
    <location>
        <begin position="228"/>
        <end position="330"/>
    </location>
</feature>
<feature type="helix" evidence="45">
    <location>
        <begin position="384"/>
        <end position="488"/>
    </location>
</feature>
<organism>
    <name type="scientific">Homo sapiens</name>
    <name type="common">Human</name>
    <dbReference type="NCBI Taxonomy" id="9606"/>
    <lineage>
        <taxon>Eukaryota</taxon>
        <taxon>Metazoa</taxon>
        <taxon>Chordata</taxon>
        <taxon>Craniata</taxon>
        <taxon>Vertebrata</taxon>
        <taxon>Euteleostomi</taxon>
        <taxon>Mammalia</taxon>
        <taxon>Eutheria</taxon>
        <taxon>Euarchontoglires</taxon>
        <taxon>Primates</taxon>
        <taxon>Haplorrhini</taxon>
        <taxon>Catarrhini</taxon>
        <taxon>Hominidae</taxon>
        <taxon>Homo</taxon>
    </lineage>
</organism>
<reference key="1">
    <citation type="journal article" date="1985" name="Proc. Natl. Acad. Sci. U.S.A.">
        <title>Structure of a gene for the human epidermal 67-kDa keratin.</title>
        <authorList>
            <person name="Johnson L.D."/>
            <person name="Idler W.W."/>
            <person name="Zhou X.-M."/>
            <person name="Roop D.R."/>
            <person name="Steinert P.M."/>
        </authorList>
    </citation>
    <scope>NUCLEOTIDE SEQUENCE [GENOMIC DNA]</scope>
    <scope>VARIANTS ASN-358 AND ARG-633</scope>
</reference>
<reference key="2">
    <citation type="journal article" date="2000" name="Biochem. Biophys. Res. Commun.">
        <title>Genomic organization and amplification of the human epidermal type II keratin genes K1 and K5.</title>
        <authorList>
            <person name="Whittock N.V."/>
            <person name="Eady R.A.J."/>
            <person name="McGrath J.A."/>
        </authorList>
    </citation>
    <scope>NUCLEOTIDE SEQUENCE [GENOMIC DNA]</scope>
    <scope>VARIANTS ASN-358 AND ARG-633</scope>
</reference>
<reference key="3">
    <citation type="journal article" date="2001" name="J. Invest. Dermatol.">
        <title>Novel splice site mutation in keratin 1 underlies mild epidermolytic palmoplantar keratoderma in three kindreds.</title>
        <authorList>
            <person name="Hatsell S.J."/>
            <person name="Eady R.A.J."/>
            <person name="Wennerstrand L."/>
            <person name="Dopping-Hepenstal P.J."/>
            <person name="Leigh I.M."/>
            <person name="Munro C."/>
            <person name="Kelsell D.P."/>
        </authorList>
    </citation>
    <scope>NUCLEOTIDE SEQUENCE [GENOMIC DNA]</scope>
    <scope>INVOLVEMENT IN EPPK2</scope>
    <scope>VARIANT ARG-633</scope>
</reference>
<reference key="4">
    <citation type="journal article" date="2004" name="Nat. Genet.">
        <title>Complete sequencing and characterization of 21,243 full-length human cDNAs.</title>
        <authorList>
            <person name="Ota T."/>
            <person name="Suzuki Y."/>
            <person name="Nishikawa T."/>
            <person name="Otsuki T."/>
            <person name="Sugiyama T."/>
            <person name="Irie R."/>
            <person name="Wakamatsu A."/>
            <person name="Hayashi K."/>
            <person name="Sato H."/>
            <person name="Nagai K."/>
            <person name="Kimura K."/>
            <person name="Makita H."/>
            <person name="Sekine M."/>
            <person name="Obayashi M."/>
            <person name="Nishi T."/>
            <person name="Shibahara T."/>
            <person name="Tanaka T."/>
            <person name="Ishii S."/>
            <person name="Yamamoto J."/>
            <person name="Saito K."/>
            <person name="Kawai Y."/>
            <person name="Isono Y."/>
            <person name="Nakamura Y."/>
            <person name="Nagahari K."/>
            <person name="Murakami K."/>
            <person name="Yasuda T."/>
            <person name="Iwayanagi T."/>
            <person name="Wagatsuma M."/>
            <person name="Shiratori A."/>
            <person name="Sudo H."/>
            <person name="Hosoiri T."/>
            <person name="Kaku Y."/>
            <person name="Kodaira H."/>
            <person name="Kondo H."/>
            <person name="Sugawara M."/>
            <person name="Takahashi M."/>
            <person name="Kanda K."/>
            <person name="Yokoi T."/>
            <person name="Furuya T."/>
            <person name="Kikkawa E."/>
            <person name="Omura Y."/>
            <person name="Abe K."/>
            <person name="Kamihara K."/>
            <person name="Katsuta N."/>
            <person name="Sato K."/>
            <person name="Tanikawa M."/>
            <person name="Yamazaki M."/>
            <person name="Ninomiya K."/>
            <person name="Ishibashi T."/>
            <person name="Yamashita H."/>
            <person name="Murakawa K."/>
            <person name="Fujimori K."/>
            <person name="Tanai H."/>
            <person name="Kimata M."/>
            <person name="Watanabe M."/>
            <person name="Hiraoka S."/>
            <person name="Chiba Y."/>
            <person name="Ishida S."/>
            <person name="Ono Y."/>
            <person name="Takiguchi S."/>
            <person name="Watanabe S."/>
            <person name="Yosida M."/>
            <person name="Hotuta T."/>
            <person name="Kusano J."/>
            <person name="Kanehori K."/>
            <person name="Takahashi-Fujii A."/>
            <person name="Hara H."/>
            <person name="Tanase T.-O."/>
            <person name="Nomura Y."/>
            <person name="Togiya S."/>
            <person name="Komai F."/>
            <person name="Hara R."/>
            <person name="Takeuchi K."/>
            <person name="Arita M."/>
            <person name="Imose N."/>
            <person name="Musashino K."/>
            <person name="Yuuki H."/>
            <person name="Oshima A."/>
            <person name="Sasaki N."/>
            <person name="Aotsuka S."/>
            <person name="Yoshikawa Y."/>
            <person name="Matsunawa H."/>
            <person name="Ichihara T."/>
            <person name="Shiohata N."/>
            <person name="Sano S."/>
            <person name="Moriya S."/>
            <person name="Momiyama H."/>
            <person name="Satoh N."/>
            <person name="Takami S."/>
            <person name="Terashima Y."/>
            <person name="Suzuki O."/>
            <person name="Nakagawa S."/>
            <person name="Senoh A."/>
            <person name="Mizoguchi H."/>
            <person name="Goto Y."/>
            <person name="Shimizu F."/>
            <person name="Wakebe H."/>
            <person name="Hishigaki H."/>
            <person name="Watanabe T."/>
            <person name="Sugiyama A."/>
            <person name="Takemoto M."/>
            <person name="Kawakami B."/>
            <person name="Yamazaki M."/>
            <person name="Watanabe K."/>
            <person name="Kumagai A."/>
            <person name="Itakura S."/>
            <person name="Fukuzumi Y."/>
            <person name="Fujimori Y."/>
            <person name="Komiyama M."/>
            <person name="Tashiro H."/>
            <person name="Tanigami A."/>
            <person name="Fujiwara T."/>
            <person name="Ono T."/>
            <person name="Yamada K."/>
            <person name="Fujii Y."/>
            <person name="Ozaki K."/>
            <person name="Hirao M."/>
            <person name="Ohmori Y."/>
            <person name="Kawabata A."/>
            <person name="Hikiji T."/>
            <person name="Kobatake N."/>
            <person name="Inagaki H."/>
            <person name="Ikema Y."/>
            <person name="Okamoto S."/>
            <person name="Okitani R."/>
            <person name="Kawakami T."/>
            <person name="Noguchi S."/>
            <person name="Itoh T."/>
            <person name="Shigeta K."/>
            <person name="Senba T."/>
            <person name="Matsumura K."/>
            <person name="Nakajima Y."/>
            <person name="Mizuno T."/>
            <person name="Morinaga M."/>
            <person name="Sasaki M."/>
            <person name="Togashi T."/>
            <person name="Oyama M."/>
            <person name="Hata H."/>
            <person name="Watanabe M."/>
            <person name="Komatsu T."/>
            <person name="Mizushima-Sugano J."/>
            <person name="Satoh T."/>
            <person name="Shirai Y."/>
            <person name="Takahashi Y."/>
            <person name="Nakagawa K."/>
            <person name="Okumura K."/>
            <person name="Nagase T."/>
            <person name="Nomura N."/>
            <person name="Kikuchi H."/>
            <person name="Masuho Y."/>
            <person name="Yamashita R."/>
            <person name="Nakai K."/>
            <person name="Yada T."/>
            <person name="Nakamura Y."/>
            <person name="Ohara O."/>
            <person name="Isogai T."/>
            <person name="Sugano S."/>
        </authorList>
    </citation>
    <scope>NUCLEOTIDE SEQUENCE [LARGE SCALE MRNA]</scope>
    <source>
        <tissue>Tongue</tissue>
    </source>
</reference>
<reference key="5">
    <citation type="journal article" date="2006" name="Nature">
        <title>The finished DNA sequence of human chromosome 12.</title>
        <authorList>
            <person name="Scherer S.E."/>
            <person name="Muzny D.M."/>
            <person name="Buhay C.J."/>
            <person name="Chen R."/>
            <person name="Cree A."/>
            <person name="Ding Y."/>
            <person name="Dugan-Rocha S."/>
            <person name="Gill R."/>
            <person name="Gunaratne P."/>
            <person name="Harris R.A."/>
            <person name="Hawes A.C."/>
            <person name="Hernandez J."/>
            <person name="Hodgson A.V."/>
            <person name="Hume J."/>
            <person name="Jackson A."/>
            <person name="Khan Z.M."/>
            <person name="Kovar-Smith C."/>
            <person name="Lewis L.R."/>
            <person name="Lozado R.J."/>
            <person name="Metzker M.L."/>
            <person name="Milosavljevic A."/>
            <person name="Miner G.R."/>
            <person name="Montgomery K.T."/>
            <person name="Morgan M.B."/>
            <person name="Nazareth L.V."/>
            <person name="Scott G."/>
            <person name="Sodergren E."/>
            <person name="Song X.-Z."/>
            <person name="Steffen D."/>
            <person name="Lovering R.C."/>
            <person name="Wheeler D.A."/>
            <person name="Worley K.C."/>
            <person name="Yuan Y."/>
            <person name="Zhang Z."/>
            <person name="Adams C.Q."/>
            <person name="Ansari-Lari M.A."/>
            <person name="Ayele M."/>
            <person name="Brown M.J."/>
            <person name="Chen G."/>
            <person name="Chen Z."/>
            <person name="Clerc-Blankenburg K.P."/>
            <person name="Davis C."/>
            <person name="Delgado O."/>
            <person name="Dinh H.H."/>
            <person name="Draper H."/>
            <person name="Gonzalez-Garay M.L."/>
            <person name="Havlak P."/>
            <person name="Jackson L.R."/>
            <person name="Jacob L.S."/>
            <person name="Kelly S.H."/>
            <person name="Li L."/>
            <person name="Li Z."/>
            <person name="Liu J."/>
            <person name="Liu W."/>
            <person name="Lu J."/>
            <person name="Maheshwari M."/>
            <person name="Nguyen B.-V."/>
            <person name="Okwuonu G.O."/>
            <person name="Pasternak S."/>
            <person name="Perez L.M."/>
            <person name="Plopper F.J.H."/>
            <person name="Santibanez J."/>
            <person name="Shen H."/>
            <person name="Tabor P.E."/>
            <person name="Verduzco D."/>
            <person name="Waldron L."/>
            <person name="Wang Q."/>
            <person name="Williams G.A."/>
            <person name="Zhang J."/>
            <person name="Zhou J."/>
            <person name="Allen C.C."/>
            <person name="Amin A.G."/>
            <person name="Anyalebechi V."/>
            <person name="Bailey M."/>
            <person name="Barbaria J.A."/>
            <person name="Bimage K.E."/>
            <person name="Bryant N.P."/>
            <person name="Burch P.E."/>
            <person name="Burkett C.E."/>
            <person name="Burrell K.L."/>
            <person name="Calderon E."/>
            <person name="Cardenas V."/>
            <person name="Carter K."/>
            <person name="Casias K."/>
            <person name="Cavazos I."/>
            <person name="Cavazos S.R."/>
            <person name="Ceasar H."/>
            <person name="Chacko J."/>
            <person name="Chan S.N."/>
            <person name="Chavez D."/>
            <person name="Christopoulos C."/>
            <person name="Chu J."/>
            <person name="Cockrell R."/>
            <person name="Cox C.D."/>
            <person name="Dang M."/>
            <person name="Dathorne S.R."/>
            <person name="David R."/>
            <person name="Davis C.M."/>
            <person name="Davy-Carroll L."/>
            <person name="Deshazo D.R."/>
            <person name="Donlin J.E."/>
            <person name="D'Souza L."/>
            <person name="Eaves K.A."/>
            <person name="Egan A."/>
            <person name="Emery-Cohen A.J."/>
            <person name="Escotto M."/>
            <person name="Flagg N."/>
            <person name="Forbes L.D."/>
            <person name="Gabisi A.M."/>
            <person name="Garza M."/>
            <person name="Hamilton C."/>
            <person name="Henderson N."/>
            <person name="Hernandez O."/>
            <person name="Hines S."/>
            <person name="Hogues M.E."/>
            <person name="Huang M."/>
            <person name="Idlebird D.G."/>
            <person name="Johnson R."/>
            <person name="Jolivet A."/>
            <person name="Jones S."/>
            <person name="Kagan R."/>
            <person name="King L.M."/>
            <person name="Leal B."/>
            <person name="Lebow H."/>
            <person name="Lee S."/>
            <person name="LeVan J.M."/>
            <person name="Lewis L.C."/>
            <person name="London P."/>
            <person name="Lorensuhewa L.M."/>
            <person name="Loulseged H."/>
            <person name="Lovett D.A."/>
            <person name="Lucier A."/>
            <person name="Lucier R.L."/>
            <person name="Ma J."/>
            <person name="Madu R.C."/>
            <person name="Mapua P."/>
            <person name="Martindale A.D."/>
            <person name="Martinez E."/>
            <person name="Massey E."/>
            <person name="Mawhiney S."/>
            <person name="Meador M.G."/>
            <person name="Mendez S."/>
            <person name="Mercado C."/>
            <person name="Mercado I.C."/>
            <person name="Merritt C.E."/>
            <person name="Miner Z.L."/>
            <person name="Minja E."/>
            <person name="Mitchell T."/>
            <person name="Mohabbat F."/>
            <person name="Mohabbat K."/>
            <person name="Montgomery B."/>
            <person name="Moore N."/>
            <person name="Morris S."/>
            <person name="Munidasa M."/>
            <person name="Ngo R.N."/>
            <person name="Nguyen N.B."/>
            <person name="Nickerson E."/>
            <person name="Nwaokelemeh O.O."/>
            <person name="Nwokenkwo S."/>
            <person name="Obregon M."/>
            <person name="Oguh M."/>
            <person name="Oragunye N."/>
            <person name="Oviedo R.J."/>
            <person name="Parish B.J."/>
            <person name="Parker D.N."/>
            <person name="Parrish J."/>
            <person name="Parks K.L."/>
            <person name="Paul H.A."/>
            <person name="Payton B.A."/>
            <person name="Perez A."/>
            <person name="Perrin W."/>
            <person name="Pickens A."/>
            <person name="Primus E.L."/>
            <person name="Pu L.-L."/>
            <person name="Puazo M."/>
            <person name="Quiles M.M."/>
            <person name="Quiroz J.B."/>
            <person name="Rabata D."/>
            <person name="Reeves K."/>
            <person name="Ruiz S.J."/>
            <person name="Shao H."/>
            <person name="Sisson I."/>
            <person name="Sonaike T."/>
            <person name="Sorelle R.P."/>
            <person name="Sutton A.E."/>
            <person name="Svatek A.F."/>
            <person name="Svetz L.A."/>
            <person name="Tamerisa K.S."/>
            <person name="Taylor T.R."/>
            <person name="Teague B."/>
            <person name="Thomas N."/>
            <person name="Thorn R.D."/>
            <person name="Trejos Z.Y."/>
            <person name="Trevino B.K."/>
            <person name="Ukegbu O.N."/>
            <person name="Urban J.B."/>
            <person name="Vasquez L.I."/>
            <person name="Vera V.A."/>
            <person name="Villasana D.M."/>
            <person name="Wang L."/>
            <person name="Ward-Moore S."/>
            <person name="Warren J.T."/>
            <person name="Wei X."/>
            <person name="White F."/>
            <person name="Williamson A.L."/>
            <person name="Wleczyk R."/>
            <person name="Wooden H.S."/>
            <person name="Wooden S.H."/>
            <person name="Yen J."/>
            <person name="Yoon L."/>
            <person name="Yoon V."/>
            <person name="Zorrilla S.E."/>
            <person name="Nelson D."/>
            <person name="Kucherlapati R."/>
            <person name="Weinstock G."/>
            <person name="Gibbs R.A."/>
        </authorList>
    </citation>
    <scope>NUCLEOTIDE SEQUENCE [LARGE SCALE GENOMIC DNA]</scope>
</reference>
<reference key="6">
    <citation type="journal article" date="2004" name="Genome Res.">
        <title>The status, quality, and expansion of the NIH full-length cDNA project: the Mammalian Gene Collection (MGC).</title>
        <authorList>
            <consortium name="The MGC Project Team"/>
        </authorList>
    </citation>
    <scope>NUCLEOTIDE SEQUENCE [LARGE SCALE MRNA]</scope>
    <scope>VARIANT ARG-633</scope>
    <source>
        <tissue>Skin</tissue>
    </source>
</reference>
<reference key="7">
    <citation type="journal article" date="2003" name="Nat. Biotechnol.">
        <title>Exploring proteomes and analyzing protein processing by mass spectrometric identification of sorted N-terminal peptides.</title>
        <authorList>
            <person name="Gevaert K."/>
            <person name="Goethals M."/>
            <person name="Martens L."/>
            <person name="Van Damme J."/>
            <person name="Staes A."/>
            <person name="Thomas G.R."/>
            <person name="Vandekerckhove J."/>
        </authorList>
    </citation>
    <scope>PROTEIN SEQUENCE OF 2-8</scope>
    <source>
        <tissue>Platelet</tissue>
    </source>
</reference>
<reference key="8">
    <citation type="submission" date="2008-12" db="UniProtKB">
        <authorList>
            <person name="Bienvenut W.V."/>
            <person name="Lilla S."/>
            <person name="von Kriegsheim A."/>
            <person name="Lempens A."/>
            <person name="Kolch W."/>
        </authorList>
    </citation>
    <scope>PROTEIN SEQUENCE OF 13-30; 66-82; 186-240; 258-276; 278-298; 344-355; 365-386; 396-403; 408-416; 418-432; 442-455 AND 461-588</scope>
    <scope>METHYLATION AT ARG-82 AND LYS-276</scope>
    <scope>IDENTIFICATION BY MASS SPECTROMETRY</scope>
    <source>
        <tissue>Ovarian carcinoma</tissue>
    </source>
</reference>
<reference key="9">
    <citation type="journal article" date="1985" name="J. Biol. Chem.">
        <title>Amino acid sequences of mouse and human epidermal type II keratins of Mr 67,000 provide a systematic basis for the structural and functional diversity of the end domains of keratin intermediate filament subunits.</title>
        <authorList>
            <person name="Steinert P.M."/>
            <person name="Parry D.A.D."/>
            <person name="Idler W.W."/>
            <person name="Johnson L.D."/>
            <person name="Steven A.C."/>
            <person name="Roop D.R."/>
        </authorList>
    </citation>
    <scope>PRELIMINARY NUCLEOTIDE SEQUENCE [MRNA] OF 152-644</scope>
    <scope>VARIANTS CYS-537 AND ARG-633</scope>
</reference>
<reference key="10">
    <citation type="submission" date="2008-12" db="UniProtKB">
        <authorList>
            <person name="Lubec G."/>
            <person name="Chen W.-Q."/>
            <person name="Sun Y."/>
        </authorList>
    </citation>
    <scope>PROTEIN SEQUENCE OF 377-386</scope>
    <scope>IDENTIFICATION BY MASS SPECTROMETRY</scope>
    <source>
        <tissue>Fetal brain cortex</tissue>
    </source>
</reference>
<reference key="11">
    <citation type="journal article" date="1996" name="Biochem. Biophys. Res. Commun.">
        <title>Preferential deimination of keratin K1 and filaggrin during the terminal differentiation of human epidermis.</title>
        <authorList>
            <person name="Senshu T."/>
            <person name="Kan S."/>
            <person name="Ogawa H."/>
            <person name="Manabe M."/>
            <person name="Asaga H."/>
        </authorList>
    </citation>
    <scope>CITRULLINATION</scope>
</reference>
<reference key="12">
    <citation type="journal article" date="2001" name="J. Invest. Dermatol.">
        <title>Evidence for novel functions of the keratin tail emerging from a mutation causing ichthyosis hystrix.</title>
        <authorList>
            <person name="Sprecher E."/>
            <person name="Ishida-Yamamoto A."/>
            <person name="Becker O.M."/>
            <person name="Marekov L.N."/>
            <person name="Miller C.J."/>
            <person name="Steinert P.M."/>
            <person name="Neldner K."/>
            <person name="Richard G."/>
        </authorList>
    </citation>
    <scope>INVOLVEMENT IN IHCM</scope>
</reference>
<reference key="13">
    <citation type="journal article" date="2002" name="J. Invest. Dermatol.">
        <title>Sequential reorganization of cornified cell keratin filaments involving filaggrin-mediated compaction and keratin 1 deimination.</title>
        <authorList>
            <person name="Ishida-Yamamoto A."/>
            <person name="Senshu T."/>
            <person name="Eady R.A.J."/>
            <person name="Takahashi H."/>
            <person name="Shimizu H."/>
            <person name="Akiyama M."/>
            <person name="Iizuka H."/>
        </authorList>
    </citation>
    <scope>CITRULLINATION</scope>
</reference>
<reference key="14">
    <citation type="journal article" date="2002" name="J. Invest. Dermatol.">
        <title>Frameshift mutation in the V2 domain of human keratin 1 results in striate palmoplantar keratoderma.</title>
        <authorList>
            <person name="Whittock N.V."/>
            <person name="Smith F.J."/>
            <person name="Wan H."/>
            <person name="Mallipeddi R."/>
            <person name="Griffiths W.A.D."/>
            <person name="Dopping-Hepenstal P.J."/>
            <person name="Ashton G.H.S."/>
            <person name="Eady R.A.J."/>
            <person name="McLean W.H.I."/>
            <person name="McGrath J.A."/>
        </authorList>
    </citation>
    <scope>INVOLVEMENT IN SPPK3</scope>
</reference>
<reference key="15">
    <citation type="journal article" date="2003" name="Nature">
        <title>Proteomic characterization of the human centrosome by protein correlation profiling.</title>
        <authorList>
            <person name="Andersen J.S."/>
            <person name="Wilkinson C.J."/>
            <person name="Mayor T."/>
            <person name="Mortensen P."/>
            <person name="Nigg E.A."/>
            <person name="Mann M."/>
        </authorList>
    </citation>
    <scope>IDENTIFICATION BY MASS SPECTROMETRY</scope>
    <source>
        <tissue>Lymphoblast</tissue>
    </source>
</reference>
<reference key="16">
    <citation type="journal article" date="2006" name="J. Dermatol.">
        <title>Interactions between epiplakin and intermediate filaments.</title>
        <authorList>
            <person name="Wang W."/>
            <person name="Sumiyoshi H."/>
            <person name="Yoshioka H."/>
            <person name="Fujiwara S."/>
        </authorList>
    </citation>
    <scope>INTERACTION WITH EPPK1</scope>
</reference>
<reference key="17">
    <citation type="journal article" date="2006" name="Mol. Plant Microbe Interact.">
        <title>Proteomic comparison of needles from blister rust-resistant and susceptible Pinus strobus seedlings reveals upregulation of putative disease resistance proteins.</title>
        <authorList>
            <person name="Smith J.A."/>
            <person name="Blanchette R.A."/>
            <person name="Burnes T.A."/>
            <person name="Jacobs J.J."/>
            <person name="Higgins L."/>
            <person name="Witthuhn B.A."/>
            <person name="David A.J."/>
            <person name="Gillman J.H."/>
        </authorList>
    </citation>
    <scope>IDENTIFICATION BY MASS SPECTROMETRY</scope>
</reference>
<reference key="18">
    <citation type="journal article" date="2007" name="Biochem. Soc. Trans.">
        <title>Interaction of integrin beta1 with cytokeratin 1 in neuroblastoma NMB7 cells.</title>
        <authorList>
            <person name="Chuang N.N."/>
            <person name="Huang C.C."/>
        </authorList>
    </citation>
    <scope>FUNCTION</scope>
    <scope>INTERACTION WITH RACK1 AND ITGB1</scope>
    <scope>SUBCELLULAR LOCATION</scope>
    <scope>IDENTIFICATION BY MASS SPECTROMETRY</scope>
</reference>
<reference key="19">
    <citation type="journal article" date="2008" name="J. Proteomics">
        <title>A proteomics approach to identify proteins differentially expressed in Douglas-fir seedlings infected by Phellinus sulphurascens.</title>
        <authorList>
            <person name="Islam M.A."/>
            <person name="Sturrock R.N."/>
            <person name="Ekramoddoullah A.K.M."/>
        </authorList>
    </citation>
    <scope>IDENTIFICATION BY MASS SPECTROMETRY</scope>
</reference>
<reference key="20">
    <citation type="journal article" date="2008" name="Mol. Cell">
        <title>Kinase-selective enrichment enables quantitative phosphoproteomics of the kinome across the cell cycle.</title>
        <authorList>
            <person name="Daub H."/>
            <person name="Olsen J.V."/>
            <person name="Bairlein M."/>
            <person name="Gnad F."/>
            <person name="Oppermann F.S."/>
            <person name="Korner R."/>
            <person name="Greff Z."/>
            <person name="Keri G."/>
            <person name="Stemmann O."/>
            <person name="Mann M."/>
        </authorList>
    </citation>
    <scope>PHOSPHORYLATION [LARGE SCALE ANALYSIS] AT SER-66</scope>
    <scope>IDENTIFICATION BY MASS SPECTROMETRY [LARGE SCALE ANALYSIS]</scope>
    <source>
        <tissue>Cervix carcinoma</tissue>
    </source>
</reference>
<reference key="21">
    <citation type="journal article" date="2009" name="Sci. Signal.">
        <title>Quantitative phosphoproteomic analysis of T cell receptor signaling reveals system-wide modulation of protein-protein interactions.</title>
        <authorList>
            <person name="Mayya V."/>
            <person name="Lundgren D.H."/>
            <person name="Hwang S.-I."/>
            <person name="Rezaul K."/>
            <person name="Wu L."/>
            <person name="Eng J.K."/>
            <person name="Rodionov V."/>
            <person name="Han D.K."/>
        </authorList>
    </citation>
    <scope>PHOSPHORYLATION [LARGE SCALE ANALYSIS] AT SER-21</scope>
    <scope>IDENTIFICATION BY MASS SPECTROMETRY [LARGE SCALE ANALYSIS]</scope>
    <source>
        <tissue>Leukemic T-cell</tissue>
    </source>
</reference>
<reference key="22">
    <citation type="journal article" date="2010" name="Appl. Biochem. Biotechnol.">
        <title>Proteomics approach to identify unique xylem sap proteins in Pierce's disease-tolerant Vitis species.</title>
        <authorList>
            <person name="Basha S.M."/>
            <person name="Mazhar H."/>
            <person name="Vasanthaiah H.K.N."/>
        </authorList>
    </citation>
    <scope>IDENTIFICATION BY MASS SPECTROMETRY</scope>
    <source>
        <tissue>Xylem</tissue>
    </source>
</reference>
<reference key="23">
    <citation type="journal article" date="2010" name="Sci. Signal.">
        <title>Quantitative phosphoproteomics reveals widespread full phosphorylation site occupancy during mitosis.</title>
        <authorList>
            <person name="Olsen J.V."/>
            <person name="Vermeulen M."/>
            <person name="Santamaria A."/>
            <person name="Kumar C."/>
            <person name="Miller M.L."/>
            <person name="Jensen L.J."/>
            <person name="Gnad F."/>
            <person name="Cox J."/>
            <person name="Jensen T.S."/>
            <person name="Nigg E.A."/>
            <person name="Brunak S."/>
            <person name="Mann M."/>
        </authorList>
    </citation>
    <scope>PHOSPHORYLATION [LARGE SCALE ANALYSIS] AT SER-21; SER-66 AND SER-344</scope>
    <scope>IDENTIFICATION BY MASS SPECTROMETRY [LARGE SCALE ANALYSIS]</scope>
    <source>
        <tissue>Cervix carcinoma</tissue>
    </source>
</reference>
<reference key="24">
    <citation type="journal article" date="2011" name="BMC Syst. Biol.">
        <title>Initial characterization of the human central proteome.</title>
        <authorList>
            <person name="Burkard T.R."/>
            <person name="Planyavsky M."/>
            <person name="Kaupe I."/>
            <person name="Breitwieser F.P."/>
            <person name="Buerckstuemmer T."/>
            <person name="Bennett K.L."/>
            <person name="Superti-Furga G."/>
            <person name="Colinge J."/>
        </authorList>
    </citation>
    <scope>IDENTIFICATION BY MASS SPECTROMETRY [LARGE SCALE ANALYSIS]</scope>
</reference>
<reference key="25">
    <citation type="journal article" date="2011" name="Thromb. Haemost.">
        <title>Interaction of high-molecular-weight kininogen with endothelial cell binding proteins suPAR, gC1qR and cytokeratin 1 determined by surface plasmon resonance (BiaCore).</title>
        <authorList>
            <person name="Pixley R.A."/>
            <person name="Espinola R.G."/>
            <person name="Ghebrehiwet B."/>
            <person name="Joseph K."/>
            <person name="Kao A."/>
            <person name="Bdeir K."/>
            <person name="Cines D.B."/>
            <person name="Colman R.W."/>
        </authorList>
    </citation>
    <scope>FUNCTION</scope>
    <scope>INTERACTION WITH C1QBP</scope>
</reference>
<reference key="26">
    <citation type="journal article" date="2013" name="J. Proteomics">
        <title>Incorrectly annotated keratin derived peptide sequences lead to misleading MS/MS data interpretation.</title>
        <authorList>
            <person name="Nawrot R."/>
            <person name="Barylski J."/>
            <person name="Schulze W.X."/>
        </authorList>
    </citation>
    <scope>CORRECTION OF SPECIES OF ORIGIN</scope>
</reference>
<reference key="27">
    <citation type="journal article" date="2014" name="J. Invest. Dermatol.">
        <title>Interaction of plectin with keratins 5 and 14: dependence on several plectin domains and keratin quaternary structure.</title>
        <authorList>
            <person name="Bouameur J.E."/>
            <person name="Favre B."/>
            <person name="Fontao L."/>
            <person name="Lingasamy P."/>
            <person name="Begre N."/>
            <person name="Borradori L."/>
        </authorList>
    </citation>
    <scope>INTERACTION WITH PLEC AND KRT10</scope>
</reference>
<reference key="28">
    <citation type="journal article" date="2014" name="J. Proteomics">
        <title>An enzyme assisted RP-RPLC approach for in-depth analysis of human liver phosphoproteome.</title>
        <authorList>
            <person name="Bian Y."/>
            <person name="Song C."/>
            <person name="Cheng K."/>
            <person name="Dong M."/>
            <person name="Wang F."/>
            <person name="Huang J."/>
            <person name="Sun D."/>
            <person name="Wang L."/>
            <person name="Ye M."/>
            <person name="Zou H."/>
        </authorList>
    </citation>
    <scope>IDENTIFICATION BY MASS SPECTROMETRY [LARGE SCALE ANALYSIS]</scope>
    <source>
        <tissue>Liver</tissue>
    </source>
</reference>
<reference key="29">
    <citation type="journal article" date="2015" name="Proteomics">
        <title>N-terminome analysis of the human mitochondrial proteome.</title>
        <authorList>
            <person name="Vaca Jacome A.S."/>
            <person name="Rabilloud T."/>
            <person name="Schaeffer-Reiss C."/>
            <person name="Rompais M."/>
            <person name="Ayoub D."/>
            <person name="Lane L."/>
            <person name="Bairoch A."/>
            <person name="Van Dorsselaer A."/>
            <person name="Carapito C."/>
        </authorList>
    </citation>
    <scope>IDENTIFICATION BY MASS SPECTROMETRY [LARGE SCALE ANALYSIS]</scope>
</reference>
<reference key="30">
    <citation type="journal article" date="2020" name="Sci. Rep.">
        <title>Serum lipids, retinoic acid and phenol red differentially regulate expression of keratins K1, K10 and K2 in cultured keratinocytes.</title>
        <authorList>
            <person name="Aldehlawi H."/>
            <person name="Usman S."/>
            <person name="Lalli A."/>
            <person name="Ahmad F."/>
            <person name="Williams G."/>
            <person name="Teh M.T."/>
            <person name="Waseem A."/>
        </authorList>
    </citation>
    <scope>SUBCELLULAR LOCATION</scope>
    <scope>INDUCTION BY ATRA</scope>
</reference>
<reference evidence="40" key="31">
    <citation type="journal article" date="2017" name="J. Invest. Dermatol.">
        <title>The X-Ray Crystal Structure of the Keratin1-Keratin 10 Helix 2B Heterodimer Reveals Molecular Surface Properties and Biochemical Insights into Human Skin Disease.</title>
        <authorList>
            <person name="Bunick C.G."/>
            <person name="Milstone L.M."/>
        </authorList>
    </citation>
    <scope>X-RAY CRYSTALLOGRAPHY (3.30 ANGSTROMS) OF 370-489 IN COMPLEX WITH KRT10</scope>
    <scope>SUBUNIT</scope>
</reference>
<reference key="32">
    <citation type="journal article" date="1992" name="Cell">
        <title>A leucine--&gt;proline mutation in the H1 subdomain of keratin 1 causes epidermolytic hyperkeratosis.</title>
        <authorList>
            <person name="Chipev C.C."/>
            <person name="Korge B.P."/>
            <person name="Markova N."/>
            <person name="Bale S.J."/>
            <person name="Digiovanna J.J."/>
            <person name="Compton J.G."/>
            <person name="Steinert P.M."/>
        </authorList>
    </citation>
    <scope>VARIANT EHK1 PRO-161</scope>
</reference>
<reference key="33">
    <citation type="journal article" date="1992" name="J. Invest. Dermatol.">
        <title>The two size alleles of human keratin 1 are due to a deletion in the glycine-rich carboxyl-terminal V2 subdomain.</title>
        <authorList>
            <person name="Korge B.P."/>
            <person name="Compton J.G."/>
            <person name="Steinert P.M."/>
            <person name="Mischke D."/>
        </authorList>
    </citation>
    <scope>VARIANT ALLELE 1B 560-GLY--TYR-566 DEL</scope>
</reference>
<reference key="34">
    <citation type="journal article" date="1992" name="Science">
        <title>Mutations in the rod domains of keratins 1 and 10 in epidermolytic hyperkeratosis.</title>
        <authorList>
            <person name="Rothnagel J.A."/>
            <person name="Dominey A.M."/>
            <person name="Dempsey L.D."/>
            <person name="Longley M.A."/>
            <person name="Greenhalgh D.A."/>
            <person name="Gagne T.A."/>
            <person name="Huber M."/>
            <person name="Frenk E."/>
            <person name="Hohl D."/>
            <person name="Roop D.R."/>
        </authorList>
    </citation>
    <scope>VARIANT EHK1 GLN-490</scope>
</reference>
<reference key="35">
    <citation type="journal article" date="1994" name="J. Clin. Invest.">
        <title>Genetic mutations in the K1 and K10 genes of patients with epidermolytic hyperkeratosis. Correlation between location and disease severity.</title>
        <authorList>
            <person name="Syder A.J."/>
            <person name="Yu Q.-C."/>
            <person name="Paller A.S."/>
            <person name="Giudice G."/>
            <person name="Pearson R."/>
            <person name="Fuchs E."/>
        </authorList>
    </citation>
    <scope>VARIANT EHK1 CYS-482</scope>
</reference>
<reference key="36">
    <citation type="journal article" date="1994" name="J. Invest. Dermatol.">
        <title>Mutations in the H1 and 1A domains in the keratin 1 gene in epidermolytic hyperkeratosis.</title>
        <authorList>
            <person name="Yang J.-M."/>
            <person name="Chipev C.C."/>
            <person name="Digiovanna J.J."/>
            <person name="Bale S.J."/>
            <person name="Marekov L.N."/>
            <person name="Steinert P.M."/>
            <person name="Compton J.G."/>
        </authorList>
    </citation>
    <scope>VARIANTS EHK1 GLY-155; SER-188 AND PRO-193</scope>
</reference>
<reference key="37">
    <citation type="journal article" date="1994" name="J. Invest. Dermatol.">
        <title>Mutations in the rod 1A domain of keratins 1 and 10 in bullous congenital ichthyosiform erythroderma (BCIE).</title>
        <authorList>
            <person name="McLean W.H.I."/>
            <person name="Eady R.A.J."/>
            <person name="Dopping-Hepenstal P.J.C."/>
            <person name="McMillan J.R."/>
            <person name="Leigh I.M."/>
            <person name="Navsaria H.A."/>
            <person name="Higgins C."/>
            <person name="Harper J.I."/>
            <person name="Paige D.G."/>
            <person name="Morley S.M."/>
        </authorList>
    </citation>
    <scope>VARIANTS EHK1 PRO-186 AND SER-188</scope>
</reference>
<reference key="38">
    <citation type="journal article" date="1994" name="J. Invest. Dermatol.">
        <title>A mutation in the V1 end domain of keratin 1 in non-epidermolytic palmar-plantar keratoderma.</title>
        <authorList>
            <person name="Kimonis V."/>
            <person name="DiGiovanna J.J."/>
            <person name="Yang J.-M."/>
            <person name="Doyle S.Z."/>
            <person name="Bale S.J."/>
            <person name="Compton J.G."/>
        </authorList>
    </citation>
    <scope>VARIANT NEPPK ILE-74</scope>
</reference>
<reference key="39">
    <citation type="journal article" date="1998" name="J. Invest. Dermatol.">
        <title>An atypical form of bullous congenital ichthyosiform erythroderma is caused by a mutation in the L12 linker region of keratin 1.</title>
        <authorList>
            <person name="Kremer H."/>
            <person name="Lavrijsen A.P."/>
            <person name="McLean W.H.I."/>
            <person name="Lane E.B."/>
            <person name="Melchers D."/>
            <person name="Ruiter D.J."/>
            <person name="Mariman E.C."/>
            <person name="Steijlen P.M."/>
        </authorList>
    </citation>
    <scope>VARIANT EHK1 VAL-340</scope>
</reference>
<reference key="40">
    <citation type="journal article" date="1999" name="Am. J. Hum. Genet.">
        <title>Cyclic ichthyosis with epidermolytic hyperkeratosis: a phenotype conferred by mutations in the 2B domain of keratin K1.</title>
        <authorList>
            <person name="Sybert V.P."/>
            <person name="Francis J.S."/>
            <person name="Corden L.D."/>
            <person name="Smith L.T."/>
            <person name="Weaver M."/>
            <person name="Stephens K."/>
            <person name="McLean W.H.I."/>
        </authorList>
    </citation>
    <scope>VARIANTS AEI2 PHE-479 AND THR-479</scope>
</reference>
<reference key="41">
    <citation type="journal article" date="1999" name="Exp. Dermatol.">
        <title>An asparagine to threonine substitution in the 1A domain of keratin 1: a novel mutation that causes epidermolytic hyperkeratosis.</title>
        <authorList>
            <person name="Arin M.J."/>
            <person name="Longley M.A."/>
            <person name="Kuster W."/>
            <person name="Huber M."/>
            <person name="Hohl D."/>
            <person name="Rothnagel J.A."/>
            <person name="Roop D.R."/>
        </authorList>
    </citation>
    <scope>VARIANT EHK1 THR-188</scope>
</reference>
<reference key="42">
    <citation type="journal article" date="1999" name="Exp. Dermatol.">
        <title>Epidermolytic hyperkeratosis with polycyclic psoriasiform plaques resulting from a mutation in the keratin 1 gene.</title>
        <authorList>
            <person name="Michael E.J."/>
            <person name="Schneiderman P."/>
            <person name="Grossman M.E."/>
            <person name="Christiano A.M."/>
        </authorList>
    </citation>
    <scope>VARIANT AEI2 PHE-479</scope>
</reference>
<reference key="43">
    <citation type="journal article" date="2000" name="Clin. Exp. Dermatol.">
        <title>Epidermolytic hyperkeratosis in a Hispanic family resulting from a mutation in the keratin 1 gene.</title>
        <authorList>
            <person name="Cserhalmi-Friedman P.B."/>
            <person name="Squeo R."/>
            <person name="Gordon D."/>
            <person name="Garzon M."/>
            <person name="Schneiderman P."/>
            <person name="Grossman M.E."/>
            <person name="Christiano A.M."/>
        </authorList>
    </citation>
    <scope>VARIANT EHK1 PRO-214</scope>
</reference>
<reference key="44">
    <citation type="journal article" date="2000" name="Exp. Dermatol.">
        <title>Identification of a novel mutation in keratin 1 in a family with epidermolytic hyperkeratosis.</title>
        <authorList>
            <person name="Arin M.J."/>
            <person name="Longley M.A."/>
            <person name="Epstein E.H. Jr."/>
            <person name="Rothnagel J.A."/>
            <person name="Roop D.R."/>
        </authorList>
    </citation>
    <scope>VARIANT EHK1 THR-479</scope>
</reference>
<reference key="45">
    <citation type="journal article" date="2001" name="Br. J. Dermatol.">
        <title>New mutations in keratin 1 that cause bullous congenital ichthyosiform erythroderma and keratin 2e that cause ichthyosis bullosa of Siemens.</title>
        <authorList>
            <person name="Whittock N.V."/>
            <person name="Ashton G.H.S."/>
            <person name="Griffiths W.A.D."/>
            <person name="Eady R.A.J."/>
            <person name="McGrath J.A."/>
        </authorList>
    </citation>
    <scope>VARIANT EHK1 ASP-155</scope>
</reference>
<reference key="46">
    <citation type="journal article" date="2002" name="J. Invest. Dermatol.">
        <title>Two cases of primarily palmoplantar keratoderma associated with novel mutations in keratin 1.</title>
        <authorList>
            <person name="Terron-Kwiatkowski A."/>
            <person name="Paller A.S."/>
            <person name="Compton J."/>
            <person name="Atherton D.J."/>
            <person name="McLean W.H."/>
            <person name="Irvine A.D."/>
        </authorList>
    </citation>
    <scope>VARIANTS PALMOPLANTAR KERATODERMA 176-VAL--LYS-197 DEL AND 459-ALA--GLN-466 DEL</scope>
</reference>
<reference key="47">
    <citation type="journal article" date="2002" name="J. Invest. Dermatol.">
        <title>Two novel mutations in the keratin 1 gene in epidermolytic hyperkeratosis.</title>
        <authorList>
            <person name="Lee D.-Y."/>
            <person name="Ahn K.-S."/>
            <person name="Lee C.-H."/>
            <person name="Rho N.-K."/>
            <person name="Lee J.-H."/>
            <person name="Lee E.-S."/>
            <person name="Steinert P.M."/>
            <person name="Yang J.-M."/>
        </authorList>
    </citation>
    <scope>VARIANTS EHK1 LYS-188 AND PRO-486</scope>
</reference>
<reference key="48">
    <citation type="journal article" date="2011" name="Br. J. Dermatol.">
        <title>Expanding the keratin mutation database: novel and recurrent mutations and genotype-phenotype correlations in 28 patients with epidermolytic ichthyosis.</title>
        <authorList>
            <person name="Arin M.J."/>
            <person name="Oji V."/>
            <person name="Emmert S."/>
            <person name="Hausser I."/>
            <person name="Traupe H."/>
            <person name="Krieg T."/>
            <person name="Grimberg G."/>
        </authorList>
    </citation>
    <scope>VARIANTS EHK1 LYS-188; SER-188; GLN-478; THR-479; PRO-485; PRO-486 AND LYS-490</scope>
</reference>
<reference key="49">
    <citation type="journal article" date="2023" name="J. Dermatol.">
        <title>A Japanese case of Voerner-type palmoplantar keratoderma caused by a novel KRT1 variant.</title>
        <authorList>
            <person name="Nakamizo S."/>
            <person name="Murata T."/>
            <person name="Ishida Y."/>
            <person name="Aoki S."/>
            <person name="Sasaki T."/>
            <person name="Kubo A."/>
            <person name="Kabashima K."/>
        </authorList>
    </citation>
    <scope>VARIANT EPPK2 ASP-436</scope>
    <scope>INVOLVEMENT IN EPPK2</scope>
</reference>
<name>K2C1_HUMAN</name>
<keyword id="KW-0002">3D-structure</keyword>
<keyword id="KW-1003">Cell membrane</keyword>
<keyword id="KW-0164">Citrullination</keyword>
<keyword id="KW-0175">Coiled coil</keyword>
<keyword id="KW-0963">Cytoplasm</keyword>
<keyword id="KW-0903">Direct protein sequencing</keyword>
<keyword id="KW-0225">Disease variant</keyword>
<keyword id="KW-0977">Ichthyosis</keyword>
<keyword id="KW-0403">Intermediate filament</keyword>
<keyword id="KW-0416">Keratin</keyword>
<keyword id="KW-0472">Membrane</keyword>
<keyword id="KW-0488">Methylation</keyword>
<keyword id="KW-1007">Palmoplantar keratoderma</keyword>
<keyword id="KW-0597">Phosphoprotein</keyword>
<keyword id="KW-1267">Proteomics identification</keyword>
<keyword id="KW-1185">Reference proteome</keyword>
<protein>
    <recommendedName>
        <fullName>Keratin, type II cytoskeletal 1</fullName>
    </recommendedName>
    <alternativeName>
        <fullName>67 kDa cytokeratin</fullName>
    </alternativeName>
    <alternativeName>
        <fullName>Cytokeratin-1</fullName>
        <shortName>CK-1</shortName>
    </alternativeName>
    <alternativeName>
        <fullName>Hair alpha protein</fullName>
    </alternativeName>
    <alternativeName>
        <fullName>Keratin-1</fullName>
        <shortName>K1</shortName>
    </alternativeName>
    <alternativeName>
        <fullName>Type-II keratin Kb1</fullName>
    </alternativeName>
</protein>
<evidence type="ECO:0000250" key="1">
    <source>
        <dbReference type="UniProtKB" id="P04104"/>
    </source>
</evidence>
<evidence type="ECO:0000255" key="2">
    <source>
        <dbReference type="PROSITE-ProRule" id="PRU01188"/>
    </source>
</evidence>
<evidence type="ECO:0000256" key="3">
    <source>
        <dbReference type="SAM" id="MobiDB-lite"/>
    </source>
</evidence>
<evidence type="ECO:0000269" key="4">
    <source>
    </source>
</evidence>
<evidence type="ECO:0000269" key="5">
    <source>
    </source>
</evidence>
<evidence type="ECO:0000269" key="6">
    <source>
    </source>
</evidence>
<evidence type="ECO:0000269" key="7">
    <source>
    </source>
</evidence>
<evidence type="ECO:0000269" key="8">
    <source>
    </source>
</evidence>
<evidence type="ECO:0000269" key="9">
    <source>
    </source>
</evidence>
<evidence type="ECO:0000269" key="10">
    <source>
    </source>
</evidence>
<evidence type="ECO:0000269" key="11">
    <source>
    </source>
</evidence>
<evidence type="ECO:0000269" key="12">
    <source>
    </source>
</evidence>
<evidence type="ECO:0000269" key="13">
    <source>
    </source>
</evidence>
<evidence type="ECO:0000269" key="14">
    <source>
    </source>
</evidence>
<evidence type="ECO:0000269" key="15">
    <source>
    </source>
</evidence>
<evidence type="ECO:0000269" key="16">
    <source>
    </source>
</evidence>
<evidence type="ECO:0000269" key="17">
    <source>
    </source>
</evidence>
<evidence type="ECO:0000269" key="18">
    <source>
    </source>
</evidence>
<evidence type="ECO:0000269" key="19">
    <source>
    </source>
</evidence>
<evidence type="ECO:0000269" key="20">
    <source>
    </source>
</evidence>
<evidence type="ECO:0000269" key="21">
    <source>
    </source>
</evidence>
<evidence type="ECO:0000269" key="22">
    <source>
    </source>
</evidence>
<evidence type="ECO:0000269" key="23">
    <source>
    </source>
</evidence>
<evidence type="ECO:0000269" key="24">
    <source>
    </source>
</evidence>
<evidence type="ECO:0000269" key="25">
    <source>
    </source>
</evidence>
<evidence type="ECO:0000269" key="26">
    <source>
    </source>
</evidence>
<evidence type="ECO:0000269" key="27">
    <source>
    </source>
</evidence>
<evidence type="ECO:0000269" key="28">
    <source>
    </source>
</evidence>
<evidence type="ECO:0000269" key="29">
    <source>
    </source>
</evidence>
<evidence type="ECO:0000269" key="30">
    <source>
    </source>
</evidence>
<evidence type="ECO:0000269" key="31">
    <source>
    </source>
</evidence>
<evidence type="ECO:0000269" key="32">
    <source>
    </source>
</evidence>
<evidence type="ECO:0000269" key="33">
    <source>
    </source>
</evidence>
<evidence type="ECO:0000269" key="34">
    <source>
    </source>
</evidence>
<evidence type="ECO:0000269" key="35">
    <source>
    </source>
</evidence>
<evidence type="ECO:0000269" key="36">
    <source>
    </source>
</evidence>
<evidence type="ECO:0000269" key="37">
    <source ref="8"/>
</evidence>
<evidence type="ECO:0000305" key="38"/>
<evidence type="ECO:0000305" key="39">
    <source>
    </source>
</evidence>
<evidence type="ECO:0007744" key="40">
    <source>
        <dbReference type="PDB" id="4ZRY"/>
    </source>
</evidence>
<evidence type="ECO:0007744" key="41">
    <source>
    </source>
</evidence>
<evidence type="ECO:0007744" key="42">
    <source>
    </source>
</evidence>
<evidence type="ECO:0007744" key="43">
    <source>
    </source>
</evidence>
<evidence type="ECO:0007829" key="44">
    <source>
        <dbReference type="PDB" id="6E2J"/>
    </source>
</evidence>
<evidence type="ECO:0007829" key="45">
    <source>
        <dbReference type="PDB" id="6UUI"/>
    </source>
</evidence>
<comment type="function">
    <text evidence="22 24">May regulate the activity of kinases such as PKC and SRC via binding to integrin beta-1 (ITB1) and the receptor of activated protein C kinase 1 (RACK1). In complex with C1QBP is a high affinity receptor for kininogen-1/HMWK.</text>
</comment>
<comment type="subunit">
    <text evidence="1 21 22 24 25 28">Heterotetramer of two type I and two type II keratins (PubMed:24940650, PubMed:27595935). Heterodimer with KRT10 (PubMed:24940650, PubMed:27595935). Two heterodimers of KRT1 and KRT10 form a heterotetramer (PubMed:27595935). Forms a heterodimer with KRT14; the interaction is more abundant in the absence of KRT5 (By similarity). Interacts with PLEC isoform 1C, when in a heterodimer with KRT10 (PubMed:24940650). Interacts with ITGB1 in the presence of RACK1 and SRC, and with RACK1 (PubMed:17956333). Interacts with C1QBP; the association represents a cell surface kininogen receptor (PubMed:21544310). Interacts with EPPK1; interaction is dependent of higher-order structure of intermediate filament (PubMed:16923132).</text>
</comment>
<comment type="interaction">
    <interactant intactId="EBI-298429">
        <id>P04264</id>
    </interactant>
    <interactant intactId="EBI-746752">
        <id>Q9Y2J4</id>
        <label>AMOTL2</label>
    </interactant>
    <organismsDiffer>false</organismsDiffer>
    <experiments>3</experiments>
</comment>
<comment type="interaction">
    <interactant intactId="EBI-298429">
        <id>P04264</id>
    </interactant>
    <interactant intactId="EBI-2833872">
        <id>O15552</id>
        <label>FFAR2</label>
    </interactant>
    <organismsDiffer>false</organismsDiffer>
    <experiments>3</experiments>
</comment>
<comment type="interaction">
    <interactant intactId="EBI-298429">
        <id>P04264</id>
    </interactant>
    <interactant intactId="EBI-618309">
        <id>Q08379</id>
        <label>GOLGA2</label>
    </interactant>
    <organismsDiffer>false</organismsDiffer>
    <experiments>6</experiments>
</comment>
<comment type="interaction">
    <interactant intactId="EBI-298429">
        <id>P04264</id>
    </interactant>
    <interactant intactId="EBI-5916454">
        <id>A6NEM1</id>
        <label>GOLGA6L9</label>
    </interactant>
    <organismsDiffer>false</organismsDiffer>
    <experiments>3</experiments>
</comment>
<comment type="interaction">
    <interactant intactId="EBI-298429">
        <id>P04264</id>
    </interactant>
    <interactant intactId="EBI-2514791">
        <id>Q96CS2</id>
        <label>HAUS1</label>
    </interactant>
    <organismsDiffer>false</organismsDiffer>
    <experiments>3</experiments>
</comment>
<comment type="interaction">
    <interactant intactId="EBI-298429">
        <id>P04264</id>
    </interactant>
    <interactant intactId="EBI-740641">
        <id>Q9NP66</id>
        <label>HMG20A</label>
    </interactant>
    <organismsDiffer>false</organismsDiffer>
    <experiments>3</experiments>
</comment>
<comment type="interaction">
    <interactant intactId="EBI-298429">
        <id>P04264</id>
    </interactant>
    <interactant intactId="EBI-10961706">
        <id>Q96ED9-2</id>
        <label>HOOK2</label>
    </interactant>
    <organismsDiffer>false</organismsDiffer>
    <experiments>3</experiments>
</comment>
<comment type="interaction">
    <interactant intactId="EBI-298429">
        <id>P04264</id>
    </interactant>
    <interactant intactId="EBI-465144">
        <id>P13645</id>
        <label>KRT10</label>
    </interactant>
    <organismsDiffer>false</organismsDiffer>
    <experiments>5</experiments>
</comment>
<comment type="interaction">
    <interactant intactId="EBI-298429">
        <id>P04264</id>
    </interactant>
    <interactant intactId="EBI-1223876">
        <id>P13646</id>
        <label>KRT13</label>
    </interactant>
    <organismsDiffer>false</organismsDiffer>
    <experiments>3</experiments>
</comment>
<comment type="interaction">
    <interactant intactId="EBI-298429">
        <id>P04264</id>
    </interactant>
    <interactant intactId="EBI-702178">
        <id>P02533</id>
        <label>KRT14</label>
    </interactant>
    <organismsDiffer>false</organismsDiffer>
    <experiments>3</experiments>
</comment>
<comment type="interaction">
    <interactant intactId="EBI-298429">
        <id>P04264</id>
    </interactant>
    <interactant intactId="EBI-739566">
        <id>P19012</id>
        <label>KRT15</label>
    </interactant>
    <organismsDiffer>false</organismsDiffer>
    <experiments>7</experiments>
</comment>
<comment type="interaction">
    <interactant intactId="EBI-298429">
        <id>P04264</id>
    </interactant>
    <interactant intactId="EBI-356410">
        <id>P08779</id>
        <label>KRT16</label>
    </interactant>
    <organismsDiffer>false</organismsDiffer>
    <experiments>3</experiments>
</comment>
<comment type="interaction">
    <interactant intactId="EBI-298429">
        <id>P04264</id>
    </interactant>
    <interactant intactId="EBI-742756">
        <id>P08727</id>
        <label>KRT19</label>
    </interactant>
    <organismsDiffer>false</organismsDiffer>
    <experiments>3</experiments>
</comment>
<comment type="interaction">
    <interactant intactId="EBI-298429">
        <id>P04264</id>
    </interactant>
    <interactant intactId="EBI-2952736">
        <id>Q2M2I5</id>
        <label>KRT24</label>
    </interactant>
    <organismsDiffer>false</organismsDiffer>
    <experiments>3</experiments>
</comment>
<comment type="interaction">
    <interactant intactId="EBI-298429">
        <id>P04264</id>
    </interactant>
    <interactant intactId="EBI-11980019">
        <id>Q7Z3Z0</id>
        <label>KRT25</label>
    </interactant>
    <organismsDiffer>false</organismsDiffer>
    <experiments>3</experiments>
</comment>
<comment type="interaction">
    <interactant intactId="EBI-298429">
        <id>P04264</id>
    </interactant>
    <interactant intactId="EBI-12084444">
        <id>Q7Z3Y9</id>
        <label>KRT26</label>
    </interactant>
    <organismsDiffer>false</organismsDiffer>
    <experiments>3</experiments>
</comment>
<comment type="interaction">
    <interactant intactId="EBI-298429">
        <id>P04264</id>
    </interactant>
    <interactant intactId="EBI-3044087">
        <id>Q7Z3Y8</id>
        <label>KRT27</label>
    </interactant>
    <organismsDiffer>false</organismsDiffer>
    <experiments>3</experiments>
</comment>
<comment type="interaction">
    <interactant intactId="EBI-298429">
        <id>P04264</id>
    </interactant>
    <interactant intactId="EBI-11980489">
        <id>Q7Z3Y7</id>
        <label>KRT28</label>
    </interactant>
    <organismsDiffer>false</organismsDiffer>
    <experiments>5</experiments>
</comment>
<comment type="interaction">
    <interactant intactId="EBI-298429">
        <id>P04264</id>
    </interactant>
    <interactant intactId="EBI-948001">
        <id>Q15323</id>
        <label>KRT31</label>
    </interactant>
    <organismsDiffer>false</organismsDiffer>
    <experiments>3</experiments>
</comment>
<comment type="interaction">
    <interactant intactId="EBI-298429">
        <id>P04264</id>
    </interactant>
    <interactant intactId="EBI-1049638">
        <id>Q14525</id>
        <label>KRT33B</label>
    </interactant>
    <organismsDiffer>false</organismsDiffer>
    <experiments>7</experiments>
</comment>
<comment type="interaction">
    <interactant intactId="EBI-298429">
        <id>P04264</id>
    </interactant>
    <interactant intactId="EBI-1047093">
        <id>O76011</id>
        <label>KRT34</label>
    </interactant>
    <organismsDiffer>false</organismsDiffer>
    <experiments>3</experiments>
</comment>
<comment type="interaction">
    <interactant intactId="EBI-298429">
        <id>P04264</id>
    </interactant>
    <interactant intactId="EBI-1058674">
        <id>Q92764</id>
        <label>KRT35</label>
    </interactant>
    <organismsDiffer>false</organismsDiffer>
    <experiments>3</experiments>
</comment>
<comment type="interaction">
    <interactant intactId="EBI-298429">
        <id>P04264</id>
    </interactant>
    <interactant intactId="EBI-11958506">
        <id>O76013-2</id>
        <label>KRT36</label>
    </interactant>
    <organismsDiffer>false</organismsDiffer>
    <experiments>3</experiments>
</comment>
<comment type="interaction">
    <interactant intactId="EBI-298429">
        <id>P04264</id>
    </interactant>
    <interactant intactId="EBI-1045716">
        <id>O76014</id>
        <label>KRT37</label>
    </interactant>
    <organismsDiffer>false</organismsDiffer>
    <experiments>3</experiments>
</comment>
<comment type="interaction">
    <interactant intactId="EBI-298429">
        <id>P04264</id>
    </interactant>
    <interactant intactId="EBI-1047263">
        <id>O76015</id>
        <label>KRT38</label>
    </interactant>
    <organismsDiffer>false</organismsDiffer>
    <experiments>3</experiments>
</comment>
<comment type="interaction">
    <interactant intactId="EBI-298429">
        <id>P04264</id>
    </interactant>
    <interactant intactId="EBI-11958242">
        <id>Q6A163</id>
        <label>KRT39</label>
    </interactant>
    <organismsDiffer>false</organismsDiffer>
    <experiments>3</experiments>
</comment>
<comment type="interaction">
    <interactant intactId="EBI-298429">
        <id>P04264</id>
    </interactant>
    <interactant intactId="EBI-720768">
        <id>Q9H492</id>
        <label>MAP1LC3A</label>
    </interactant>
    <organismsDiffer>false</organismsDiffer>
    <experiments>2</experiments>
</comment>
<comment type="interaction">
    <interactant intactId="EBI-298429">
        <id>P04264</id>
    </interactant>
    <interactant intactId="EBI-347978">
        <id>P37198</id>
        <label>NUP62</label>
    </interactant>
    <organismsDiffer>false</organismsDiffer>
    <experiments>7</experiments>
</comment>
<comment type="interaction">
    <interactant intactId="EBI-298429">
        <id>P04264</id>
    </interactant>
    <interactant intactId="EBI-726876">
        <id>Q6NUQ1</id>
        <label>RINT1</label>
    </interactant>
    <organismsDiffer>false</organismsDiffer>
    <experiments>3</experiments>
</comment>
<comment type="interaction">
    <interactant intactId="EBI-298429">
        <id>P04264</id>
    </interactant>
    <interactant intactId="EBI-744081">
        <id>Q96EQ0</id>
        <label>SGTB</label>
    </interactant>
    <organismsDiffer>false</organismsDiffer>
    <experiments>3</experiments>
</comment>
<comment type="interaction">
    <interactant intactId="EBI-298429">
        <id>P04264</id>
    </interactant>
    <interactant intactId="EBI-1105213">
        <id>Q9UBB9</id>
        <label>TFIP11</label>
    </interactant>
    <organismsDiffer>false</organismsDiffer>
    <experiments>3</experiments>
</comment>
<comment type="interaction">
    <interactant intactId="EBI-298429">
        <id>P04264</id>
    </interactant>
    <interactant intactId="EBI-12947623">
        <id>Q96MV1</id>
        <label>TLCD4</label>
    </interactant>
    <organismsDiffer>false</organismsDiffer>
    <experiments>3</experiments>
</comment>
<comment type="interaction">
    <interactant intactId="EBI-298429">
        <id>P04264</id>
    </interactant>
    <interactant intactId="EBI-719493">
        <id>P14373</id>
        <label>TRIM27</label>
    </interactant>
    <organismsDiffer>false</organismsDiffer>
    <experiments>4</experiments>
</comment>
<comment type="interaction">
    <interactant intactId="EBI-298429">
        <id>P04264</id>
    </interactant>
    <interactant intactId="EBI-2130429">
        <id>Q9BYV2</id>
        <label>TRIM54</label>
    </interactant>
    <organismsDiffer>false</organismsDiffer>
    <experiments>3</experiments>
</comment>
<comment type="interaction">
    <interactant intactId="EBI-298429">
        <id>P04264</id>
    </interactant>
    <interactant intactId="EBI-632461">
        <id>Q01081</id>
        <label>U2AF1</label>
    </interactant>
    <organismsDiffer>false</organismsDiffer>
    <experiments>3</experiments>
</comment>
<comment type="subcellular location">
    <subcellularLocation>
        <location evidence="22">Cell membrane</location>
    </subcellularLocation>
    <subcellularLocation>
        <location evidence="29">Cytoplasm</location>
    </subcellularLocation>
</comment>
<comment type="tissue specificity">
    <text>The source of this protein is neonatal foreskin. The 67-kDa type II keratins are expressed in terminally differentiating epidermis.</text>
</comment>
<comment type="induction">
    <text evidence="29">Repressed in keratinocytes by all-trans retinoic acid (ATRA), via reduction of mRNA stability.</text>
</comment>
<comment type="PTM">
    <text evidence="13 35">Undergoes deimination of some arginine residues (citrullination).</text>
</comment>
<comment type="polymorphism">
    <text>There are two size variants of KRT1, termed allele 1A and allele 1B with allelic frequencies of 0.61 and 0.39. Allele 1B lacks 7 residues compared to allele 1A.</text>
</comment>
<comment type="disease" evidence="5 7 8 12 15 18 19 23 31 32 33 36">
    <disease id="DI-00207">
        <name>Epidermolytic hyperkeratosis 1</name>
        <acronym>EHK1</acronym>
        <description>A skin disorder characterized by widespread blistering and an ichthyotic erythroderma at birth that persist into adulthood. Histologically there is a diffuse epidermolytic degeneration in the lower spinous layer of the epidermis. Within a few weeks from birth, erythroderma and blister formation diminish and hyperkeratoses develop. EHK1 inheritance is autosomal dominant or autosomal recessive.</description>
        <dbReference type="MIM" id="113800"/>
    </disease>
    <text>The disease is caused by variants affecting the gene represented in this entry.</text>
</comment>
<comment type="disease" evidence="10">
    <disease id="DI-00585">
        <name>Ichthyosis hystrix, Curth-Macklin type</name>
        <acronym>IHCM</acronym>
        <description>A genodermatosis with severe verrucous hyperkeratosis. Affected individuals manifest congenital verrucous black scale on the scalp, neck, and limbs with truncal erythema, palmoplantar keratoderma and keratoses on the lips, ears, nipples and buttocks.</description>
        <dbReference type="MIM" id="146590"/>
    </disease>
    <text>The disease is caused by variants affecting the gene represented in this entry.</text>
</comment>
<comment type="disease" evidence="34">
    <disease id="DI-00894">
        <name>Keratoderma, palmoplantar, non-epidermolytic</name>
        <acronym>NEPPK</acronym>
        <description>A dermatological disorder characterized by well-demarcated hyperkeratosis is present over the palms and soles. A red band is frequently present at the periphery of the keratosis. It is usually non-transgredient, with a sharp demarcation of the lesions at the wrists.</description>
        <dbReference type="MIM" id="600962"/>
    </disease>
    <text>The disease is caused by variants affecting the gene represented in this entry.</text>
</comment>
<comment type="disease" evidence="4 6">
    <disease id="DI-06539">
        <name>Ichthyosis, annular epidermolytic, 2</name>
        <acronym>AEI2</acronym>
        <description>A form of annular epidermolytic ichthyosis, an autosomal dominant skin disorder characterized by polycyclic, migratory erythematous and scaly plaques. AEI2 patients manifest erythema and blistering of skin at birth that improves without scarring, as well as palmoplantar keratoderma.</description>
        <dbReference type="MIM" id="620148"/>
    </disease>
    <text>The disease is caused by variants affecting the gene represented in this entry.</text>
</comment>
<comment type="disease" evidence="14">
    <disease id="DI-00897">
        <name>Keratoderma, palmoplantar, striate 3</name>
        <acronym>SPPK3</acronym>
        <description>A dermatological disorder characterized by thickening of the stratum corneum and epidermal layers on palms and soles. There is no involvement of non-palmoplantar skin, and both hair and nails are normal.</description>
        <dbReference type="MIM" id="607654"/>
    </disease>
    <text>The disease is caused by variants affecting the gene represented in this entry.</text>
</comment>
<comment type="disease" evidence="11 30">
    <disease id="DI-06700">
        <name>Palmoplantar keratoderma, epidermolytic, 2</name>
        <acronym>EPPK2</acronym>
        <description>A form of epidermolytic palmoplantar keratoderma, a dermatological disorder characterized by diffuse thickening of the epidermis on the entire surface of palms and soles sharply bordered with erythematous margins. Some patients may present knuckle pads, thick pads of skin appearing over the proximal phalangeal joints. EPPK2 is an autosomal dominant form in which hyperkeratosis is restricted to palms and soles and is apparent from birth or childhood.</description>
        <dbReference type="MIM" id="620411"/>
    </disease>
    <text>The disease is caused by variants affecting the gene represented in this entry.</text>
</comment>
<comment type="miscellaneous">
    <text>There are two types of cytoskeletal and microfibrillar keratin: I (acidic; 40-55 kDa) and II (neutral to basic; 56-70 kDa).</text>
</comment>
<comment type="similarity">
    <text evidence="2">Belongs to the intermediate filament family.</text>
</comment>
<comment type="caution">
    <text evidence="39">A peptide corresponding to residues 278 to 289 was isolated as part of plant proteomics studies and was originally thought to be of plant origin (PubMed:16529377, PubMed:18602030, PubMed:19412582). However, it was later shown that it is likely to be human type II keratin, a common contaminant in proteomic analyzes (PubMed:23895828).</text>
</comment>
<comment type="online information" name="Wikipedia">
    <link uri="https://en.wikipedia.org/wiki/Keratin_1"/>
    <text>Keratin-1 entry</text>
</comment>
<dbReference type="EMBL" id="M98776">
    <property type="protein sequence ID" value="AAB47721.1"/>
    <property type="molecule type" value="Genomic_DNA"/>
</dbReference>
<dbReference type="EMBL" id="AF237621">
    <property type="protein sequence ID" value="AAF60327.1"/>
    <property type="molecule type" value="Genomic_DNA"/>
</dbReference>
<dbReference type="EMBL" id="AF304164">
    <property type="protein sequence ID" value="AAG41947.1"/>
    <property type="molecule type" value="Genomic_DNA"/>
</dbReference>
<dbReference type="EMBL" id="AK313986">
    <property type="protein sequence ID" value="BAG36698.1"/>
    <property type="molecule type" value="mRNA"/>
</dbReference>
<dbReference type="EMBL" id="AC055716">
    <property type="status" value="NOT_ANNOTATED_CDS"/>
    <property type="molecule type" value="Genomic_DNA"/>
</dbReference>
<dbReference type="EMBL" id="BC063697">
    <property type="protein sequence ID" value="AAH63697.1"/>
    <property type="molecule type" value="mRNA"/>
</dbReference>
<dbReference type="EMBL" id="M10938">
    <property type="protein sequence ID" value="AAA36153.1"/>
    <property type="molecule type" value="mRNA"/>
</dbReference>
<dbReference type="CCDS" id="CCDS8836.1"/>
<dbReference type="PIR" id="A22940">
    <property type="entry name" value="KRHU2"/>
</dbReference>
<dbReference type="RefSeq" id="NP_006112.3">
    <property type="nucleotide sequence ID" value="NM_006121.3"/>
</dbReference>
<dbReference type="PDB" id="4ZRY">
    <property type="method" value="X-ray"/>
    <property type="resolution" value="3.30 A"/>
    <property type="chains" value="B=370-489"/>
</dbReference>
<dbReference type="PDB" id="6E2J">
    <property type="method" value="X-ray"/>
    <property type="resolution" value="2.39 A"/>
    <property type="chains" value="A=226-331"/>
</dbReference>
<dbReference type="PDB" id="6UUI">
    <property type="method" value="X-ray"/>
    <property type="resolution" value="2.07 A"/>
    <property type="chains" value="C=370-489"/>
</dbReference>
<dbReference type="PDBsum" id="4ZRY"/>
<dbReference type="PDBsum" id="6E2J"/>
<dbReference type="PDBsum" id="6UUI"/>
<dbReference type="SMR" id="P04264"/>
<dbReference type="BioGRID" id="110046">
    <property type="interactions" value="241"/>
</dbReference>
<dbReference type="ComplexPortal" id="CPX-5662">
    <property type="entry name" value="Keratin-1 - Keratin-10 dimer complex"/>
</dbReference>
<dbReference type="CORUM" id="P04264"/>
<dbReference type="FunCoup" id="P04264">
    <property type="interactions" value="255"/>
</dbReference>
<dbReference type="IntAct" id="P04264">
    <property type="interactions" value="81"/>
</dbReference>
<dbReference type="MINT" id="P04264"/>
<dbReference type="STRING" id="9606.ENSP00000252244"/>
<dbReference type="DrugBank" id="DB09130">
    <property type="generic name" value="Copper"/>
</dbReference>
<dbReference type="DrugBank" id="DB01593">
    <property type="generic name" value="Zinc"/>
</dbReference>
<dbReference type="DrugBank" id="DB14487">
    <property type="generic name" value="Zinc acetate"/>
</dbReference>
<dbReference type="GlyConnect" id="1952">
    <property type="glycosylation" value="3 N-Linked glycans (1 site)"/>
</dbReference>
<dbReference type="GlyCosmos" id="P04264">
    <property type="glycosylation" value="4 sites, 4 glycans"/>
</dbReference>
<dbReference type="GlyGen" id="P04264">
    <property type="glycosylation" value="6 sites, 3 N-linked glycans (1 site), 2 O-linked glycans (5 sites)"/>
</dbReference>
<dbReference type="iPTMnet" id="P04264"/>
<dbReference type="PhosphoSitePlus" id="P04264"/>
<dbReference type="SwissPalm" id="P04264"/>
<dbReference type="BioMuta" id="KRT1"/>
<dbReference type="DMDM" id="238054406"/>
<dbReference type="REPRODUCTION-2DPAGE" id="P04264"/>
<dbReference type="jPOST" id="P04264"/>
<dbReference type="MassIVE" id="P04264"/>
<dbReference type="PaxDb" id="9606-ENSP00000252244"/>
<dbReference type="PeptideAtlas" id="P04264"/>
<dbReference type="PRIDE" id="P04264"/>
<dbReference type="ProteomicsDB" id="51694"/>
<dbReference type="Antibodypedia" id="3686">
    <property type="antibodies" value="1252 antibodies from 39 providers"/>
</dbReference>
<dbReference type="DNASU" id="3848"/>
<dbReference type="Ensembl" id="ENST00000252244.3">
    <property type="protein sequence ID" value="ENSP00000252244.3"/>
    <property type="gene ID" value="ENSG00000167768.4"/>
</dbReference>
<dbReference type="GeneID" id="3848"/>
<dbReference type="KEGG" id="hsa:3848"/>
<dbReference type="MANE-Select" id="ENST00000252244.3">
    <property type="protein sequence ID" value="ENSP00000252244.3"/>
    <property type="RefSeq nucleotide sequence ID" value="NM_006121.4"/>
    <property type="RefSeq protein sequence ID" value="NP_006112.3"/>
</dbReference>
<dbReference type="UCSC" id="uc001sau.1">
    <property type="organism name" value="human"/>
</dbReference>
<dbReference type="AGR" id="HGNC:6412"/>
<dbReference type="CTD" id="3848"/>
<dbReference type="DisGeNET" id="3848"/>
<dbReference type="GeneCards" id="KRT1"/>
<dbReference type="HGNC" id="HGNC:6412">
    <property type="gene designation" value="KRT1"/>
</dbReference>
<dbReference type="HPA" id="ENSG00000167768">
    <property type="expression patterns" value="Tissue enriched (skin)"/>
</dbReference>
<dbReference type="MalaCards" id="KRT1"/>
<dbReference type="MIM" id="113800">
    <property type="type" value="phenotype"/>
</dbReference>
<dbReference type="MIM" id="139350">
    <property type="type" value="gene"/>
</dbReference>
<dbReference type="MIM" id="146590">
    <property type="type" value="phenotype"/>
</dbReference>
<dbReference type="MIM" id="600962">
    <property type="type" value="phenotype"/>
</dbReference>
<dbReference type="MIM" id="607654">
    <property type="type" value="phenotype"/>
</dbReference>
<dbReference type="MIM" id="620148">
    <property type="type" value="phenotype"/>
</dbReference>
<dbReference type="MIM" id="620411">
    <property type="type" value="phenotype"/>
</dbReference>
<dbReference type="neXtProt" id="NX_P04264"/>
<dbReference type="OpenTargets" id="ENSG00000167768"/>
<dbReference type="Orphanet" id="281139">
    <property type="disease" value="Annular epidermolytic ichthyosis"/>
</dbReference>
<dbReference type="Orphanet" id="312">
    <property type="disease" value="Autosomal dominant epidermolytic ichthyosis"/>
</dbReference>
<dbReference type="Orphanet" id="281190">
    <property type="disease" value="Congenital reticular ichthyosiform erythroderma"/>
</dbReference>
<dbReference type="Orphanet" id="2199">
    <property type="disease" value="Epidermolytic palmoplantar keratoderma"/>
</dbReference>
<dbReference type="Orphanet" id="79503">
    <property type="disease" value="Ichthyosis hystrix of Curth-Macklin"/>
</dbReference>
<dbReference type="Orphanet" id="530838">
    <property type="disease" value="KRT1-related diffuse nonepidermolytic keratoderma"/>
</dbReference>
<dbReference type="Orphanet" id="538574">
    <property type="disease" value="Palmoplantar keratoderma-hereditary motor and sensory neuropathy syndrome"/>
</dbReference>
<dbReference type="Orphanet" id="50942">
    <property type="disease" value="Striate palmoplantar keratoderma"/>
</dbReference>
<dbReference type="PharmGKB" id="PA30199"/>
<dbReference type="VEuPathDB" id="HostDB:ENSG00000167768"/>
<dbReference type="eggNOG" id="ENOG502QQIF">
    <property type="taxonomic scope" value="Eukaryota"/>
</dbReference>
<dbReference type="GeneTree" id="ENSGT00940000162175"/>
<dbReference type="HOGENOM" id="CLU_012560_6_0_1"/>
<dbReference type="InParanoid" id="P04264"/>
<dbReference type="OMA" id="FGMAPGK"/>
<dbReference type="OrthoDB" id="9539572at2759"/>
<dbReference type="PAN-GO" id="P04264">
    <property type="GO annotations" value="4 GO annotations based on evolutionary models"/>
</dbReference>
<dbReference type="PhylomeDB" id="P04264"/>
<dbReference type="TreeFam" id="TF317854"/>
<dbReference type="PathwayCommons" id="P04264"/>
<dbReference type="Reactome" id="R-HSA-6798695">
    <property type="pathway name" value="Neutrophil degranulation"/>
</dbReference>
<dbReference type="Reactome" id="R-HSA-6805567">
    <property type="pathway name" value="Keratinization"/>
</dbReference>
<dbReference type="Reactome" id="R-HSA-6809371">
    <property type="pathway name" value="Formation of the cornified envelope"/>
</dbReference>
<dbReference type="Reactome" id="R-HSA-9725554">
    <property type="pathway name" value="Differentiation of Keratinocytes in Interfollicular Epidermis in Mammalian Skin"/>
</dbReference>
<dbReference type="SignaLink" id="P04264"/>
<dbReference type="SIGNOR" id="P04264"/>
<dbReference type="BioGRID-ORCS" id="3848">
    <property type="hits" value="21 hits in 1152 CRISPR screens"/>
</dbReference>
<dbReference type="CD-CODE" id="91857CE7">
    <property type="entry name" value="Nucleolus"/>
</dbReference>
<dbReference type="ChiTaRS" id="KRT1">
    <property type="organism name" value="human"/>
</dbReference>
<dbReference type="EvolutionaryTrace" id="P04264"/>
<dbReference type="GeneWiki" id="Keratin_1"/>
<dbReference type="GenomeRNAi" id="3848"/>
<dbReference type="Pharos" id="P04264">
    <property type="development level" value="Tbio"/>
</dbReference>
<dbReference type="PRO" id="PR:P04264"/>
<dbReference type="Proteomes" id="UP000005640">
    <property type="component" value="Chromosome 12"/>
</dbReference>
<dbReference type="RNAct" id="P04264">
    <property type="molecule type" value="protein"/>
</dbReference>
<dbReference type="Bgee" id="ENSG00000167768">
    <property type="expression patterns" value="Expressed in upper leg skin and 108 other cell types or tissues"/>
</dbReference>
<dbReference type="GO" id="GO:0072562">
    <property type="term" value="C:blood microparticle"/>
    <property type="evidence" value="ECO:0007005"/>
    <property type="project" value="UniProtKB"/>
</dbReference>
<dbReference type="GO" id="GO:0062023">
    <property type="term" value="C:collagen-containing extracellular matrix"/>
    <property type="evidence" value="ECO:0007005"/>
    <property type="project" value="UniProtKB"/>
</dbReference>
<dbReference type="GO" id="GO:0001533">
    <property type="term" value="C:cornified envelope"/>
    <property type="evidence" value="ECO:0000314"/>
    <property type="project" value="CAFA"/>
</dbReference>
<dbReference type="GO" id="GO:0005737">
    <property type="term" value="C:cytoplasm"/>
    <property type="evidence" value="ECO:0000314"/>
    <property type="project" value="UniProtKB"/>
</dbReference>
<dbReference type="GO" id="GO:0005856">
    <property type="term" value="C:cytoskeleton"/>
    <property type="evidence" value="ECO:0000304"/>
    <property type="project" value="ProtInc"/>
</dbReference>
<dbReference type="GO" id="GO:0005829">
    <property type="term" value="C:cytosol"/>
    <property type="evidence" value="ECO:0000304"/>
    <property type="project" value="Reactome"/>
</dbReference>
<dbReference type="GO" id="GO:0070062">
    <property type="term" value="C:extracellular exosome"/>
    <property type="evidence" value="ECO:0007005"/>
    <property type="project" value="UniProtKB"/>
</dbReference>
<dbReference type="GO" id="GO:0005576">
    <property type="term" value="C:extracellular region"/>
    <property type="evidence" value="ECO:0000304"/>
    <property type="project" value="Reactome"/>
</dbReference>
<dbReference type="GO" id="GO:0005615">
    <property type="term" value="C:extracellular space"/>
    <property type="evidence" value="ECO:0007005"/>
    <property type="project" value="UniProtKB"/>
</dbReference>
<dbReference type="GO" id="GO:1904813">
    <property type="term" value="C:ficolin-1-rich granule lumen"/>
    <property type="evidence" value="ECO:0000304"/>
    <property type="project" value="Reactome"/>
</dbReference>
<dbReference type="GO" id="GO:0045095">
    <property type="term" value="C:keratin filament"/>
    <property type="evidence" value="ECO:0000353"/>
    <property type="project" value="ComplexPortal"/>
</dbReference>
<dbReference type="GO" id="GO:0016020">
    <property type="term" value="C:membrane"/>
    <property type="evidence" value="ECO:0000314"/>
    <property type="project" value="UniProtKB"/>
</dbReference>
<dbReference type="GO" id="GO:0005634">
    <property type="term" value="C:nucleus"/>
    <property type="evidence" value="ECO:0007005"/>
    <property type="project" value="UniProtKB"/>
</dbReference>
<dbReference type="GO" id="GO:0030246">
    <property type="term" value="F:carbohydrate binding"/>
    <property type="evidence" value="ECO:0000353"/>
    <property type="project" value="UniProtKB"/>
</dbReference>
<dbReference type="GO" id="GO:0046982">
    <property type="term" value="F:protein heterodimerization activity"/>
    <property type="evidence" value="ECO:0000314"/>
    <property type="project" value="UniProtKB"/>
</dbReference>
<dbReference type="GO" id="GO:0038023">
    <property type="term" value="F:signaling receptor activity"/>
    <property type="evidence" value="ECO:0000303"/>
    <property type="project" value="UniProtKB"/>
</dbReference>
<dbReference type="GO" id="GO:0030280">
    <property type="term" value="F:structural constituent of skin epidermis"/>
    <property type="evidence" value="ECO:0000314"/>
    <property type="project" value="CAFA"/>
</dbReference>
<dbReference type="GO" id="GO:0001867">
    <property type="term" value="P:complement activation, lectin pathway"/>
    <property type="evidence" value="ECO:0000353"/>
    <property type="project" value="UniProtKB"/>
</dbReference>
<dbReference type="GO" id="GO:0061436">
    <property type="term" value="P:establishment of skin barrier"/>
    <property type="evidence" value="ECO:0007669"/>
    <property type="project" value="Ensembl"/>
</dbReference>
<dbReference type="GO" id="GO:0042730">
    <property type="term" value="P:fibrinolysis"/>
    <property type="evidence" value="ECO:0000303"/>
    <property type="project" value="UniProtKB"/>
</dbReference>
<dbReference type="GO" id="GO:0045109">
    <property type="term" value="P:intermediate filament organization"/>
    <property type="evidence" value="ECO:0000318"/>
    <property type="project" value="GO_Central"/>
</dbReference>
<dbReference type="GO" id="GO:0031424">
    <property type="term" value="P:keratinization"/>
    <property type="evidence" value="ECO:0000318"/>
    <property type="project" value="GO_Central"/>
</dbReference>
<dbReference type="GO" id="GO:0050728">
    <property type="term" value="P:negative regulation of inflammatory response"/>
    <property type="evidence" value="ECO:0007669"/>
    <property type="project" value="Ensembl"/>
</dbReference>
<dbReference type="GO" id="GO:0018149">
    <property type="term" value="P:peptide cross-linking"/>
    <property type="evidence" value="ECO:0000314"/>
    <property type="project" value="CAFA"/>
</dbReference>
<dbReference type="GO" id="GO:0051290">
    <property type="term" value="P:protein heterotetramerization"/>
    <property type="evidence" value="ECO:0000314"/>
    <property type="project" value="UniProtKB"/>
</dbReference>
<dbReference type="GO" id="GO:0045765">
    <property type="term" value="P:regulation of angiogenesis"/>
    <property type="evidence" value="ECO:0000303"/>
    <property type="project" value="UniProtKB"/>
</dbReference>
<dbReference type="GO" id="GO:0006979">
    <property type="term" value="P:response to oxidative stress"/>
    <property type="evidence" value="ECO:0000303"/>
    <property type="project" value="UniProtKB"/>
</dbReference>
<dbReference type="FunFam" id="1.20.5.1160:FF:000001">
    <property type="entry name" value="Keratin type II"/>
    <property type="match status" value="1"/>
</dbReference>
<dbReference type="FunFam" id="1.20.5.170:FF:000065">
    <property type="entry name" value="Keratin, type II cytoskeletal 80"/>
    <property type="match status" value="1"/>
</dbReference>
<dbReference type="FunFam" id="1.20.5.500:FF:000001">
    <property type="entry name" value="Type II keratin 23"/>
    <property type="match status" value="1"/>
</dbReference>
<dbReference type="Gene3D" id="1.20.5.170">
    <property type="match status" value="1"/>
</dbReference>
<dbReference type="Gene3D" id="1.20.5.500">
    <property type="entry name" value="Single helix bin"/>
    <property type="match status" value="1"/>
</dbReference>
<dbReference type="Gene3D" id="1.20.5.1160">
    <property type="entry name" value="Vasodilator-stimulated phosphoprotein"/>
    <property type="match status" value="1"/>
</dbReference>
<dbReference type="InterPro" id="IPR018039">
    <property type="entry name" value="IF_conserved"/>
</dbReference>
<dbReference type="InterPro" id="IPR039008">
    <property type="entry name" value="IF_rod_dom"/>
</dbReference>
<dbReference type="InterPro" id="IPR032449">
    <property type="entry name" value="Keratin_2_1_tail"/>
</dbReference>
<dbReference type="InterPro" id="IPR032444">
    <property type="entry name" value="Keratin_2_head"/>
</dbReference>
<dbReference type="InterPro" id="IPR003054">
    <property type="entry name" value="Keratin_II"/>
</dbReference>
<dbReference type="PANTHER" id="PTHR45616">
    <property type="entry name" value="GATA-TYPE DOMAIN-CONTAINING PROTEIN"/>
    <property type="match status" value="1"/>
</dbReference>
<dbReference type="PANTHER" id="PTHR45616:SF33">
    <property type="entry name" value="KERATIN, TYPE II CYTOSKELETAL 1"/>
    <property type="match status" value="1"/>
</dbReference>
<dbReference type="Pfam" id="PF00038">
    <property type="entry name" value="Filament"/>
    <property type="match status" value="1"/>
</dbReference>
<dbReference type="Pfam" id="PF16208">
    <property type="entry name" value="Keratin_2_head"/>
    <property type="match status" value="1"/>
</dbReference>
<dbReference type="Pfam" id="PF16210">
    <property type="entry name" value="Keratin_2_tail"/>
    <property type="match status" value="1"/>
</dbReference>
<dbReference type="PRINTS" id="PR01276">
    <property type="entry name" value="TYPE2KERATIN"/>
</dbReference>
<dbReference type="SMART" id="SM01391">
    <property type="entry name" value="Filament"/>
    <property type="match status" value="1"/>
</dbReference>
<dbReference type="SUPFAM" id="SSF64593">
    <property type="entry name" value="Intermediate filament protein, coiled coil region"/>
    <property type="match status" value="3"/>
</dbReference>
<dbReference type="PROSITE" id="PS00226">
    <property type="entry name" value="IF_ROD_1"/>
    <property type="match status" value="1"/>
</dbReference>
<dbReference type="PROSITE" id="PS51842">
    <property type="entry name" value="IF_ROD_2"/>
    <property type="match status" value="1"/>
</dbReference>
<sequence length="644" mass="66039">MSRQFSSRSGYRSGGGFSSGSAGIINYQRRTTSSSTRRSGGGGGRFSSCGGGGGSFGAGGGFGSRSLVNLGGSKSISISVARGGGRGSGFGGGYGGGGFGGGGFGGGGFGGGGIGGGGFGGFGSGGGGFGGGGFGGGGYGGGYGPVCPPGGIQEVTINQSLLQPLNVEIDPEIQKVKSREREQIKSLNNQFASFIDKVRFLEQQNQVLQTKWELLQQVDTSTRTHNLEPYFESFINNLRRRVDQLKSDQSRLDSELKNMQDMVEDYRNKYEDEINKRTNAENEFVTIKKDVDGAYMTKVDLQAKLDNLQQEIDFLTALYQAELSQMQTQISETNVILSMDNNRSLDLDSIIAEVKAQYEDIAQKSKAEAESLYQSKYEELQITAGRHGDSVRNSKIEISELNRVIQRLRSEIDNVKKQISNLQQSISDAEQRGENALKDAKNKLNDLEDALQQAKEDLARLLRDYQELMNTKLALDLEIATYRTLLEGEESRMSGECAPNVSVSVSTSHTTISGGGSRGGGGGGYGSGGSSYGSGGGSYGSGGGGGGGRGSYGSGGSSYGSGGGSYGSGGGGGGHGSYGSGSSSGGYRGGSGGGGGGSSGGRGSGGGSSGGSIGGRGSSSGGVKSSGGSSSVKFVSTTYSGVTR</sequence>
<proteinExistence type="evidence at protein level"/>
<gene>
    <name type="primary">KRT1</name>
    <name type="synonym">KRTA</name>
</gene>